<accession>Q13191</accession>
<accession>A8K9S7</accession>
<accession>B7WNM4</accession>
<accession>Q13192</accession>
<accession>Q13193</accession>
<accession>Q3LIC0</accession>
<accession>Q63Z43</accession>
<accession>Q8IVC5</accession>
<feature type="chain" id="PRO_0000055860" description="E3 ubiquitin-protein ligase CBL-B">
    <location>
        <begin position="1"/>
        <end position="982"/>
    </location>
</feature>
<feature type="domain" description="Cbl-PTB" evidence="7">
    <location>
        <begin position="35"/>
        <end position="343"/>
    </location>
</feature>
<feature type="domain" description="UBA" evidence="6">
    <location>
        <begin position="931"/>
        <end position="970"/>
    </location>
</feature>
<feature type="zinc finger region" description="RING-type" evidence="5">
    <location>
        <begin position="373"/>
        <end position="412"/>
    </location>
</feature>
<feature type="region of interest" description="4H">
    <location>
        <begin position="35"/>
        <end position="167"/>
    </location>
</feature>
<feature type="region of interest" description="EF-hand-like">
    <location>
        <begin position="168"/>
        <end position="240"/>
    </location>
</feature>
<feature type="region of interest" description="SH2-like">
    <location>
        <begin position="241"/>
        <end position="343"/>
    </location>
</feature>
<feature type="region of interest" description="Linker">
    <location>
        <begin position="344"/>
        <end position="372"/>
    </location>
</feature>
<feature type="region of interest" description="Disordered" evidence="8">
    <location>
        <begin position="466"/>
        <end position="571"/>
    </location>
</feature>
<feature type="region of interest" description="Interaction with VAV1" evidence="25">
    <location>
        <begin position="543"/>
        <end position="568"/>
    </location>
</feature>
<feature type="region of interest" description="Disordered" evidence="8">
    <location>
        <begin position="688"/>
        <end position="731"/>
    </location>
</feature>
<feature type="region of interest" description="Disordered" evidence="8">
    <location>
        <begin position="769"/>
        <end position="929"/>
    </location>
</feature>
<feature type="region of interest" description="Interaction with SH3KBP1" evidence="14">
    <location>
        <begin position="891"/>
        <end position="927"/>
    </location>
</feature>
<feature type="compositionally biased region" description="Polar residues" evidence="8">
    <location>
        <begin position="473"/>
        <end position="486"/>
    </location>
</feature>
<feature type="compositionally biased region" description="Pro residues" evidence="8">
    <location>
        <begin position="544"/>
        <end position="567"/>
    </location>
</feature>
<feature type="compositionally biased region" description="Polar residues" evidence="8">
    <location>
        <begin position="715"/>
        <end position="725"/>
    </location>
</feature>
<feature type="compositionally biased region" description="Pro residues" evidence="8">
    <location>
        <begin position="819"/>
        <end position="828"/>
    </location>
</feature>
<feature type="compositionally biased region" description="Low complexity" evidence="8">
    <location>
        <begin position="838"/>
        <end position="848"/>
    </location>
</feature>
<feature type="compositionally biased region" description="Polar residues" evidence="8">
    <location>
        <begin position="880"/>
        <end position="899"/>
    </location>
</feature>
<feature type="compositionally biased region" description="Basic residues" evidence="8">
    <location>
        <begin position="906"/>
        <end position="922"/>
    </location>
</feature>
<feature type="binding site" evidence="2">
    <location>
        <position position="221"/>
    </location>
    <ligand>
        <name>Ca(2+)</name>
        <dbReference type="ChEBI" id="CHEBI:29108"/>
    </ligand>
</feature>
<feature type="binding site" evidence="2">
    <location>
        <position position="223"/>
    </location>
    <ligand>
        <name>Ca(2+)</name>
        <dbReference type="ChEBI" id="CHEBI:29108"/>
    </ligand>
</feature>
<feature type="binding site" evidence="2">
    <location>
        <position position="225"/>
    </location>
    <ligand>
        <name>Ca(2+)</name>
        <dbReference type="ChEBI" id="CHEBI:29108"/>
    </ligand>
</feature>
<feature type="binding site" evidence="2">
    <location>
        <position position="227"/>
    </location>
    <ligand>
        <name>Ca(2+)</name>
        <dbReference type="ChEBI" id="CHEBI:29108"/>
    </ligand>
</feature>
<feature type="binding site" evidence="2">
    <location>
        <position position="232"/>
    </location>
    <ligand>
        <name>Ca(2+)</name>
        <dbReference type="ChEBI" id="CHEBI:29108"/>
    </ligand>
</feature>
<feature type="binding site" evidence="1">
    <location>
        <position position="286"/>
    </location>
    <ligand>
        <name>4-O-phospho-L-tyrosine</name>
        <dbReference type="ChEBI" id="CHEBI:62338"/>
    </ligand>
</feature>
<feature type="modified residue" description="Phosphoserine; by PKC/PRKCQ" evidence="21">
    <location>
        <position position="282"/>
    </location>
</feature>
<feature type="modified residue" description="Phosphotyrosine" evidence="29">
    <location>
        <position position="363"/>
    </location>
</feature>
<feature type="modified residue" description="Phosphoserine" evidence="4">
    <location>
        <position position="476"/>
    </location>
</feature>
<feature type="modified residue" description="Phosphoserine" evidence="3">
    <location>
        <position position="480"/>
    </location>
</feature>
<feature type="modified residue" description="Phosphoserine" evidence="3">
    <location>
        <position position="484"/>
    </location>
</feature>
<feature type="modified residue" description="Phosphoserine" evidence="30">
    <location>
        <position position="521"/>
    </location>
</feature>
<feature type="modified residue" description="Phosphoserine" evidence="30">
    <location>
        <position position="525"/>
    </location>
</feature>
<feature type="modified residue" description="Phosphoserine" evidence="30">
    <location>
        <position position="529"/>
    </location>
</feature>
<feature type="modified residue" description="Phosphoserine" evidence="4">
    <location>
        <position position="634"/>
    </location>
</feature>
<feature type="modified residue" description="Phosphotyrosine" evidence="9">
    <location>
        <position position="665"/>
    </location>
</feature>
<feature type="modified residue" description="Phosphotyrosine" evidence="9">
    <location>
        <position position="709"/>
    </location>
</feature>
<feature type="modified residue" description="Phosphotyrosine" evidence="3">
    <location>
        <position position="889"/>
    </location>
</feature>
<feature type="splice variant" id="VSP_005730" description="In isoform Truncated 2." evidence="27">
    <original>DVFD</original>
    <variation>TYRI</variation>
    <location>
        <begin position="767"/>
        <end position="770"/>
    </location>
</feature>
<feature type="splice variant" id="VSP_005731" description="In isoform Truncated 2." evidence="27">
    <location>
        <begin position="771"/>
        <end position="982"/>
    </location>
</feature>
<feature type="splice variant" id="VSP_005729" description="In isoform Truncated 1." evidence="27">
    <location>
        <begin position="811"/>
        <end position="982"/>
    </location>
</feature>
<feature type="sequence variant" id="VAR_088738" description="In ADMIO3; likely pathogenic." evidence="24">
    <original>H</original>
    <variation>L</variation>
    <location>
        <position position="257"/>
    </location>
</feature>
<feature type="sequence variant" id="VAR_088739" description="In ADMIO3; uncertain significance." evidence="24">
    <original>C</original>
    <variation>W</variation>
    <location>
        <position position="436"/>
    </location>
</feature>
<feature type="sequence variant" id="VAR_088740" description="In ADMIO3; likely pathogenic." evidence="24">
    <location>
        <begin position="468"/>
        <end position="982"/>
    </location>
</feature>
<feature type="sequence variant" id="VAR_025303" description="In dbSNP:rs17853100." evidence="17">
    <original>R</original>
    <variation>K</variation>
    <location>
        <position position="584"/>
    </location>
</feature>
<feature type="sequence variant" id="VAR_039241" description="In dbSNP:rs35835913.">
    <original>N</original>
    <variation>D</variation>
    <location>
        <position position="883"/>
    </location>
</feature>
<feature type="mutagenesis site" description="Inhibits interaction with SYK. No effect on E3 activity." evidence="9 11">
    <original>G</original>
    <variation>E</variation>
    <location>
        <position position="298"/>
    </location>
</feature>
<feature type="mutagenesis site" description="Decreases affinity for E2 ubiquitin-conjugating enzymes." evidence="22">
    <original>Y</original>
    <variation>E</variation>
    <location>
        <position position="363"/>
    </location>
</feature>
<feature type="mutagenesis site" description="Abolishes E3 activity but does not affect binding to substrates." evidence="11 12">
    <original>C</original>
    <variation>A</variation>
    <location>
        <position position="373"/>
    </location>
</feature>
<feature type="mutagenesis site" description="Slightly inhibits interaction with CRKL. Abolishes interaction with CRKL; when associated with F-709." evidence="9">
    <original>Y</original>
    <variation>F</variation>
    <location>
        <position position="665"/>
    </location>
</feature>
<feature type="mutagenesis site" description="Inhibits interaction with CRKL. Abolishes interaction with CRKL; when associated with F-665." evidence="9">
    <original>Y</original>
    <variation>F</variation>
    <location>
        <position position="709"/>
    </location>
</feature>
<feature type="mutagenesis site" description="No effect on interaction with CD2AP. Reduced interaction with SH3KBP1. Strongly reduced interaction with SH3KBP1; when associated with A-911." evidence="18 19">
    <original>R</original>
    <variation>A</variation>
    <location>
        <position position="904"/>
    </location>
</feature>
<feature type="mutagenesis site" description="No effect on interaction with SH3KBP1. Reduced interaction with CD2AP. Strongly reduced interaction with CD2AP; when associated with A-911." evidence="19">
    <original>K</original>
    <variation>A</variation>
    <location>
        <position position="907"/>
    </location>
</feature>
<feature type="mutagenesis site" description="Reduced interaction with CD2AP and with SH3KBP1. Strongly reduced interaction with CD2AP; when associated with A-907. Strongly reduced interaction with SH3KBP1; when associated with A-904." evidence="18 19">
    <original>R</original>
    <variation>A</variation>
    <location>
        <position position="911"/>
    </location>
</feature>
<feature type="mutagenesis site" description="Loss of ubiquitin binding. Reduced levels of tyrosine phosphorylation." evidence="20">
    <original>A</original>
    <variation>E</variation>
    <location>
        <position position="937"/>
    </location>
</feature>
<feature type="mutagenesis site" description="Loss of ubiquitin binding. Reduced levels of tyrosine phosphorylation." evidence="20">
    <original>M</original>
    <variation>A</variation>
    <location>
        <position position="940"/>
    </location>
</feature>
<feature type="mutagenesis site" description="Abolishes interaction with ubiquitinated proteins." evidence="16">
    <original>GY</original>
    <variation>AQ</variation>
    <location>
        <begin position="943"/>
        <end position="944"/>
    </location>
</feature>
<feature type="mutagenesis site" description="Loss of ubiquitin binding. Reduced levels of tyrosine phosphorylation." evidence="20">
    <original>F</original>
    <variation>A</variation>
    <location>
        <position position="946"/>
    </location>
</feature>
<feature type="mutagenesis site" description="Interferes with dimerization. Reduced E3 ubiquitin-protein ligase activity. Reduced levels of tyrosine phosphorylation." evidence="20">
    <original>I</original>
    <variation>E</variation>
    <location>
        <position position="966"/>
    </location>
</feature>
<feature type="mutagenesis site" description="No effect on interaction with ubiquitinated proteins." evidence="16">
    <original>L</original>
    <variation>A</variation>
    <location>
        <position position="967"/>
    </location>
</feature>
<feature type="sequence conflict" description="In Ref. 1; AAB09291/AAB09292/AAB09293." evidence="28" ref="1">
    <original>G</original>
    <variation>S</variation>
    <location>
        <position position="210"/>
    </location>
</feature>
<feature type="sequence conflict" description="In Ref. 9; CAH56175." evidence="28" ref="9">
    <original>R</original>
    <variation>C</variation>
    <location>
        <position position="911"/>
    </location>
</feature>
<feature type="helix" evidence="37">
    <location>
        <begin position="43"/>
        <end position="60"/>
    </location>
</feature>
<feature type="helix" evidence="37">
    <location>
        <begin position="63"/>
        <end position="65"/>
    </location>
</feature>
<feature type="strand" evidence="39">
    <location>
        <begin position="69"/>
        <end position="72"/>
    </location>
</feature>
<feature type="helix" evidence="37">
    <location>
        <begin position="74"/>
        <end position="91"/>
    </location>
</feature>
<feature type="helix" evidence="37">
    <location>
        <begin position="95"/>
        <end position="102"/>
    </location>
</feature>
<feature type="helix" evidence="37">
    <location>
        <begin position="105"/>
        <end position="128"/>
    </location>
</feature>
<feature type="helix" evidence="37">
    <location>
        <begin position="129"/>
        <end position="133"/>
    </location>
</feature>
<feature type="helix" evidence="37">
    <location>
        <begin position="138"/>
        <end position="160"/>
    </location>
</feature>
<feature type="helix" evidence="37">
    <location>
        <begin position="162"/>
        <end position="164"/>
    </location>
</feature>
<feature type="helix" evidence="37">
    <location>
        <begin position="168"/>
        <end position="170"/>
    </location>
</feature>
<feature type="helix" evidence="37">
    <location>
        <begin position="176"/>
        <end position="186"/>
    </location>
</feature>
<feature type="strand" evidence="37">
    <location>
        <begin position="190"/>
        <end position="193"/>
    </location>
</feature>
<feature type="helix" evidence="37">
    <location>
        <begin position="194"/>
        <end position="204"/>
    </location>
</feature>
<feature type="helix" evidence="37">
    <location>
        <begin position="210"/>
        <end position="220"/>
    </location>
</feature>
<feature type="strand" evidence="37">
    <location>
        <begin position="225"/>
        <end position="229"/>
    </location>
</feature>
<feature type="helix" evidence="37">
    <location>
        <begin position="230"/>
        <end position="239"/>
    </location>
</feature>
<feature type="helix" evidence="37">
    <location>
        <begin position="243"/>
        <end position="245"/>
    </location>
</feature>
<feature type="helix" evidence="37">
    <location>
        <begin position="246"/>
        <end position="253"/>
    </location>
</feature>
<feature type="turn" evidence="35">
    <location>
        <begin position="254"/>
        <end position="256"/>
    </location>
</feature>
<feature type="strand" evidence="37">
    <location>
        <begin position="260"/>
        <end position="263"/>
    </location>
</feature>
<feature type="helix" evidence="37">
    <location>
        <begin position="266"/>
        <end position="274"/>
    </location>
</feature>
<feature type="turn" evidence="37">
    <location>
        <begin position="275"/>
        <end position="278"/>
    </location>
</feature>
<feature type="strand" evidence="37">
    <location>
        <begin position="282"/>
        <end position="287"/>
    </location>
</feature>
<feature type="strand" evidence="38">
    <location>
        <begin position="289"/>
        <end position="291"/>
    </location>
</feature>
<feature type="strand" evidence="37">
    <location>
        <begin position="295"/>
        <end position="300"/>
    </location>
</feature>
<feature type="strand" evidence="36">
    <location>
        <begin position="302"/>
        <end position="304"/>
    </location>
</feature>
<feature type="strand" evidence="37">
    <location>
        <begin position="306"/>
        <end position="309"/>
    </location>
</feature>
<feature type="strand" evidence="34">
    <location>
        <begin position="312"/>
        <end position="314"/>
    </location>
</feature>
<feature type="helix" evidence="37">
    <location>
        <begin position="316"/>
        <end position="325"/>
    </location>
</feature>
<feature type="helix" evidence="32">
    <location>
        <begin position="332"/>
        <end position="334"/>
    </location>
</feature>
<feature type="helix" evidence="37">
    <location>
        <begin position="342"/>
        <end position="345"/>
    </location>
</feature>
<feature type="strand" evidence="33">
    <location>
        <begin position="352"/>
        <end position="354"/>
    </location>
</feature>
<feature type="helix" evidence="37">
    <location>
        <begin position="357"/>
        <end position="364"/>
    </location>
</feature>
<feature type="turn" evidence="33">
    <location>
        <begin position="365"/>
        <end position="367"/>
    </location>
</feature>
<feature type="strand" evidence="33">
    <location>
        <begin position="370"/>
        <end position="372"/>
    </location>
</feature>
<feature type="turn" evidence="37">
    <location>
        <begin position="374"/>
        <end position="376"/>
    </location>
</feature>
<feature type="strand" evidence="37">
    <location>
        <begin position="377"/>
        <end position="380"/>
    </location>
</feature>
<feature type="strand" evidence="37">
    <location>
        <begin position="383"/>
        <end position="386"/>
    </location>
</feature>
<feature type="helix" evidence="37">
    <location>
        <begin position="394"/>
        <end position="402"/>
    </location>
</feature>
<feature type="turn" evidence="37">
    <location>
        <begin position="409"/>
        <end position="411"/>
    </location>
</feature>
<feature type="strand" evidence="37">
    <location>
        <begin position="417"/>
        <end position="420"/>
    </location>
</feature>
<feature type="strand" evidence="33">
    <location>
        <begin position="422"/>
        <end position="424"/>
    </location>
</feature>
<feature type="helix" evidence="31">
    <location>
        <begin position="933"/>
        <end position="941"/>
    </location>
</feature>
<feature type="helix" evidence="31">
    <location>
        <begin position="946"/>
        <end position="955"/>
    </location>
</feature>
<feature type="turn" evidence="31">
    <location>
        <begin position="956"/>
        <end position="958"/>
    </location>
</feature>
<feature type="helix" evidence="31">
    <location>
        <begin position="960"/>
        <end position="970"/>
    </location>
</feature>
<dbReference type="EC" id="2.3.2.27" evidence="15 22"/>
<dbReference type="EMBL" id="U26710">
    <property type="protein sequence ID" value="AAB09291.1"/>
    <property type="molecule type" value="mRNA"/>
</dbReference>
<dbReference type="EMBL" id="U26711">
    <property type="protein sequence ID" value="AAB09292.1"/>
    <property type="molecule type" value="mRNA"/>
</dbReference>
<dbReference type="EMBL" id="U26712">
    <property type="protein sequence ID" value="AAB09293.1"/>
    <property type="molecule type" value="mRNA"/>
</dbReference>
<dbReference type="EMBL" id="DQ349203">
    <property type="protein sequence ID" value="ABC86700.1"/>
    <property type="molecule type" value="mRNA"/>
</dbReference>
<dbReference type="EMBL" id="AK292792">
    <property type="protein sequence ID" value="BAF85481.1"/>
    <property type="molecule type" value="mRNA"/>
</dbReference>
<dbReference type="EMBL" id="AC016138">
    <property type="status" value="NOT_ANNOTATED_CDS"/>
    <property type="molecule type" value="Genomic_DNA"/>
</dbReference>
<dbReference type="EMBL" id="CH471052">
    <property type="protein sequence ID" value="EAW79752.1"/>
    <property type="molecule type" value="Genomic_DNA"/>
</dbReference>
<dbReference type="EMBL" id="CH471052">
    <property type="protein sequence ID" value="EAW79753.1"/>
    <property type="molecule type" value="Genomic_DNA"/>
</dbReference>
<dbReference type="EMBL" id="CH471052">
    <property type="protein sequence ID" value="EAW79754.1"/>
    <property type="molecule type" value="Genomic_DNA"/>
</dbReference>
<dbReference type="EMBL" id="BC032851">
    <property type="protein sequence ID" value="AAH32851.1"/>
    <property type="molecule type" value="mRNA"/>
</dbReference>
<dbReference type="EMBL" id="AB075490">
    <property type="protein sequence ID" value="BAE45748.1"/>
    <property type="status" value="ALT_SEQ"/>
    <property type="molecule type" value="mRNA"/>
</dbReference>
<dbReference type="EMBL" id="BX537484">
    <property type="protein sequence ID" value="CAH56175.1"/>
    <property type="status" value="ALT_SEQ"/>
    <property type="molecule type" value="mRNA"/>
</dbReference>
<dbReference type="CCDS" id="CCDS2948.1">
    <molecule id="Q13191-1"/>
</dbReference>
<dbReference type="RefSeq" id="NP_001308717.1">
    <molecule id="Q13191-1"/>
    <property type="nucleotide sequence ID" value="NM_001321788.2"/>
</dbReference>
<dbReference type="RefSeq" id="NP_733762.2">
    <molecule id="Q13191-1"/>
    <property type="nucleotide sequence ID" value="NM_170662.5"/>
</dbReference>
<dbReference type="RefSeq" id="XP_011511559.1">
    <molecule id="Q13191-1"/>
    <property type="nucleotide sequence ID" value="XM_011513257.2"/>
</dbReference>
<dbReference type="RefSeq" id="XP_047305068.1">
    <molecule id="Q13191-1"/>
    <property type="nucleotide sequence ID" value="XM_047449112.1"/>
</dbReference>
<dbReference type="RefSeq" id="XP_054204201.1">
    <molecule id="Q13191-1"/>
    <property type="nucleotide sequence ID" value="XM_054348226.1"/>
</dbReference>
<dbReference type="RefSeq" id="XP_054204202.1">
    <molecule id="Q13191-1"/>
    <property type="nucleotide sequence ID" value="XM_054348227.1"/>
</dbReference>
<dbReference type="PDB" id="2AK5">
    <property type="method" value="X-ray"/>
    <property type="resolution" value="1.85 A"/>
    <property type="chains" value="D=904-911"/>
</dbReference>
<dbReference type="PDB" id="2BZ8">
    <property type="method" value="X-ray"/>
    <property type="resolution" value="2.00 A"/>
    <property type="chains" value="C=902-912"/>
</dbReference>
<dbReference type="PDB" id="2DO6">
    <property type="method" value="NMR"/>
    <property type="chains" value="A/B=931-970"/>
</dbReference>
<dbReference type="PDB" id="2J6F">
    <property type="method" value="X-ray"/>
    <property type="resolution" value="1.70 A"/>
    <property type="chains" value="C=902-912"/>
</dbReference>
<dbReference type="PDB" id="2JNH">
    <property type="method" value="NMR"/>
    <property type="chains" value="A=926-971"/>
</dbReference>
<dbReference type="PDB" id="2LDR">
    <property type="method" value="NMR"/>
    <property type="chains" value="A=351-426"/>
</dbReference>
<dbReference type="PDB" id="2OOA">
    <property type="method" value="X-ray"/>
    <property type="resolution" value="1.56 A"/>
    <property type="chains" value="A/B=924-973"/>
</dbReference>
<dbReference type="PDB" id="2OOB">
    <property type="method" value="X-ray"/>
    <property type="resolution" value="1.90 A"/>
    <property type="chains" value="A=924-973"/>
</dbReference>
<dbReference type="PDB" id="3PFV">
    <property type="method" value="X-ray"/>
    <property type="resolution" value="2.27 A"/>
    <property type="chains" value="A/B=38-344"/>
</dbReference>
<dbReference type="PDB" id="3VGO">
    <property type="method" value="X-ray"/>
    <property type="resolution" value="3.10 A"/>
    <property type="chains" value="A/B/C=39-426"/>
</dbReference>
<dbReference type="PDB" id="3ZNI">
    <property type="method" value="X-ray"/>
    <property type="resolution" value="2.21 A"/>
    <property type="chains" value="A/E/I/M=36-427"/>
</dbReference>
<dbReference type="PDB" id="8GCY">
    <property type="method" value="X-ray"/>
    <property type="resolution" value="1.81 A"/>
    <property type="chains" value="A=38-427"/>
</dbReference>
<dbReference type="PDB" id="8QNG">
    <property type="method" value="X-ray"/>
    <property type="resolution" value="2.20 A"/>
    <property type="chains" value="A=36-427"/>
</dbReference>
<dbReference type="PDB" id="8QNH">
    <property type="method" value="X-ray"/>
    <property type="resolution" value="2.00 A"/>
    <property type="chains" value="A=36-427"/>
</dbReference>
<dbReference type="PDB" id="8QNI">
    <property type="method" value="X-ray"/>
    <property type="resolution" value="2.48 A"/>
    <property type="chains" value="A=36-427"/>
</dbReference>
<dbReference type="PDB" id="8QTG">
    <property type="method" value="X-ray"/>
    <property type="resolution" value="1.42 A"/>
    <property type="chains" value="A=36-427"/>
</dbReference>
<dbReference type="PDB" id="8QTH">
    <property type="method" value="X-ray"/>
    <property type="resolution" value="2.20 A"/>
    <property type="chains" value="A=36-427"/>
</dbReference>
<dbReference type="PDB" id="8QTJ">
    <property type="method" value="X-ray"/>
    <property type="resolution" value="1.52 A"/>
    <property type="chains" value="A=36-427"/>
</dbReference>
<dbReference type="PDB" id="8QTK">
    <property type="method" value="X-ray"/>
    <property type="resolution" value="1.87 A"/>
    <property type="chains" value="A=36-427"/>
</dbReference>
<dbReference type="PDB" id="8VW4">
    <property type="method" value="X-ray"/>
    <property type="resolution" value="2.40 A"/>
    <property type="chains" value="A/B=36-343"/>
</dbReference>
<dbReference type="PDB" id="8VW5">
    <property type="method" value="X-ray"/>
    <property type="resolution" value="1.76 A"/>
    <property type="chains" value="A/B=36-343"/>
</dbReference>
<dbReference type="PDB" id="9FQH">
    <property type="method" value="X-ray"/>
    <property type="resolution" value="1.79 A"/>
    <property type="chains" value="A=36-427"/>
</dbReference>
<dbReference type="PDB" id="9FQI">
    <property type="method" value="X-ray"/>
    <property type="resolution" value="1.95 A"/>
    <property type="chains" value="A=36-427"/>
</dbReference>
<dbReference type="PDB" id="9FQJ">
    <property type="method" value="X-ray"/>
    <property type="resolution" value="1.56 A"/>
    <property type="chains" value="A/B=36-427"/>
</dbReference>
<dbReference type="PDBsum" id="2AK5"/>
<dbReference type="PDBsum" id="2BZ8"/>
<dbReference type="PDBsum" id="2DO6"/>
<dbReference type="PDBsum" id="2J6F"/>
<dbReference type="PDBsum" id="2JNH"/>
<dbReference type="PDBsum" id="2LDR"/>
<dbReference type="PDBsum" id="2OOA"/>
<dbReference type="PDBsum" id="2OOB"/>
<dbReference type="PDBsum" id="3PFV"/>
<dbReference type="PDBsum" id="3VGO"/>
<dbReference type="PDBsum" id="3ZNI"/>
<dbReference type="PDBsum" id="8GCY"/>
<dbReference type="PDBsum" id="8QNG"/>
<dbReference type="PDBsum" id="8QNH"/>
<dbReference type="PDBsum" id="8QNI"/>
<dbReference type="PDBsum" id="8QTG"/>
<dbReference type="PDBsum" id="8QTH"/>
<dbReference type="PDBsum" id="8QTJ"/>
<dbReference type="PDBsum" id="8QTK"/>
<dbReference type="PDBsum" id="8VW4"/>
<dbReference type="PDBsum" id="8VW5"/>
<dbReference type="PDBsum" id="9FQH"/>
<dbReference type="PDBsum" id="9FQI"/>
<dbReference type="PDBsum" id="9FQJ"/>
<dbReference type="BMRB" id="Q13191"/>
<dbReference type="SMR" id="Q13191"/>
<dbReference type="BioGRID" id="107316">
    <property type="interactions" value="97"/>
</dbReference>
<dbReference type="CORUM" id="Q13191"/>
<dbReference type="DIP" id="DIP-33091N"/>
<dbReference type="FunCoup" id="Q13191">
    <property type="interactions" value="2852"/>
</dbReference>
<dbReference type="IntAct" id="Q13191">
    <property type="interactions" value="69"/>
</dbReference>
<dbReference type="MINT" id="Q13191"/>
<dbReference type="STRING" id="9606.ENSP00000499037"/>
<dbReference type="BindingDB" id="Q13191"/>
<dbReference type="ChEMBL" id="CHEMBL4879459"/>
<dbReference type="GuidetoPHARMACOLOGY" id="3234"/>
<dbReference type="GlyGen" id="Q13191">
    <property type="glycosylation" value="1 site, 1 O-linked glycan (1 site)"/>
</dbReference>
<dbReference type="iPTMnet" id="Q13191"/>
<dbReference type="PhosphoSitePlus" id="Q13191"/>
<dbReference type="BioMuta" id="CBLB"/>
<dbReference type="DMDM" id="88911265"/>
<dbReference type="jPOST" id="Q13191"/>
<dbReference type="MassIVE" id="Q13191"/>
<dbReference type="PaxDb" id="9606-ENSP00000264122"/>
<dbReference type="PeptideAtlas" id="Q13191"/>
<dbReference type="ProteomicsDB" id="59215">
    <molecule id="Q13191-1"/>
</dbReference>
<dbReference type="ProteomicsDB" id="59216">
    <molecule id="Q13191-2"/>
</dbReference>
<dbReference type="ProteomicsDB" id="59217">
    <molecule id="Q13191-3"/>
</dbReference>
<dbReference type="Pumba" id="Q13191"/>
<dbReference type="Antibodypedia" id="16015">
    <property type="antibodies" value="267 antibodies from 33 providers"/>
</dbReference>
<dbReference type="DNASU" id="868"/>
<dbReference type="Ensembl" id="ENST00000394030.8">
    <molecule id="Q13191-1"/>
    <property type="protein sequence ID" value="ENSP00000377598.4"/>
    <property type="gene ID" value="ENSG00000114423.23"/>
</dbReference>
<dbReference type="Ensembl" id="ENST00000403724.5">
    <molecule id="Q13191-3"/>
    <property type="protein sequence ID" value="ENSP00000384816.1"/>
    <property type="gene ID" value="ENSG00000114423.23"/>
</dbReference>
<dbReference type="Ensembl" id="ENST00000405772.5">
    <molecule id="Q13191-2"/>
    <property type="protein sequence ID" value="ENSP00000384938.1"/>
    <property type="gene ID" value="ENSG00000114423.23"/>
</dbReference>
<dbReference type="GeneID" id="868"/>
<dbReference type="KEGG" id="hsa:868"/>
<dbReference type="MANE-Select" id="ENST00000394030.8">
    <property type="protein sequence ID" value="ENSP00000377598.4"/>
    <property type="RefSeq nucleotide sequence ID" value="NM_170662.5"/>
    <property type="RefSeq protein sequence ID" value="NP_733762.2"/>
</dbReference>
<dbReference type="UCSC" id="uc003dwc.4">
    <molecule id="Q13191-1"/>
    <property type="organism name" value="human"/>
</dbReference>
<dbReference type="AGR" id="HGNC:1542"/>
<dbReference type="CTD" id="868"/>
<dbReference type="DisGeNET" id="868"/>
<dbReference type="GeneCards" id="CBLB"/>
<dbReference type="HGNC" id="HGNC:1542">
    <property type="gene designation" value="CBLB"/>
</dbReference>
<dbReference type="HPA" id="ENSG00000114423">
    <property type="expression patterns" value="Low tissue specificity"/>
</dbReference>
<dbReference type="MalaCards" id="CBLB"/>
<dbReference type="MIM" id="604491">
    <property type="type" value="gene"/>
</dbReference>
<dbReference type="MIM" id="620430">
    <property type="type" value="phenotype"/>
</dbReference>
<dbReference type="neXtProt" id="NX_Q13191"/>
<dbReference type="OpenTargets" id="ENSG00000114423"/>
<dbReference type="PharmGKB" id="PA26116"/>
<dbReference type="VEuPathDB" id="HostDB:ENSG00000114423"/>
<dbReference type="eggNOG" id="KOG1785">
    <property type="taxonomic scope" value="Eukaryota"/>
</dbReference>
<dbReference type="GeneTree" id="ENSGT00940000156631"/>
<dbReference type="HOGENOM" id="CLU_013535_3_0_1"/>
<dbReference type="InParanoid" id="Q13191"/>
<dbReference type="OMA" id="FACFPPP"/>
<dbReference type="OrthoDB" id="7237699at2759"/>
<dbReference type="PAN-GO" id="Q13191">
    <property type="GO annotations" value="7 GO annotations based on evolutionary models"/>
</dbReference>
<dbReference type="PhylomeDB" id="Q13191"/>
<dbReference type="TreeFam" id="TF314210"/>
<dbReference type="PathwayCommons" id="Q13191"/>
<dbReference type="Reactome" id="R-HSA-983168">
    <property type="pathway name" value="Antigen processing: Ubiquitination &amp; Proteasome degradation"/>
</dbReference>
<dbReference type="SignaLink" id="Q13191"/>
<dbReference type="SIGNOR" id="Q13191"/>
<dbReference type="UniPathway" id="UPA00143"/>
<dbReference type="BioGRID-ORCS" id="868">
    <property type="hits" value="35 hits in 1209 CRISPR screens"/>
</dbReference>
<dbReference type="ChiTaRS" id="CBLB">
    <property type="organism name" value="human"/>
</dbReference>
<dbReference type="EvolutionaryTrace" id="Q13191"/>
<dbReference type="GeneWiki" id="CBLB_(gene)"/>
<dbReference type="GenomeRNAi" id="868"/>
<dbReference type="Pharos" id="Q13191">
    <property type="development level" value="Tchem"/>
</dbReference>
<dbReference type="PRO" id="PR:Q13191"/>
<dbReference type="Proteomes" id="UP000005640">
    <property type="component" value="Chromosome 3"/>
</dbReference>
<dbReference type="RNAct" id="Q13191">
    <property type="molecule type" value="protein"/>
</dbReference>
<dbReference type="Bgee" id="ENSG00000114423">
    <property type="expression patterns" value="Expressed in pericardium and 191 other cell types or tissues"/>
</dbReference>
<dbReference type="ExpressionAtlas" id="Q13191">
    <property type="expression patterns" value="baseline and differential"/>
</dbReference>
<dbReference type="GO" id="GO:0005829">
    <property type="term" value="C:cytosol"/>
    <property type="evidence" value="ECO:0000314"/>
    <property type="project" value="HPA"/>
</dbReference>
<dbReference type="GO" id="GO:0098978">
    <property type="term" value="C:glutamatergic synapse"/>
    <property type="evidence" value="ECO:0007669"/>
    <property type="project" value="Ensembl"/>
</dbReference>
<dbReference type="GO" id="GO:0045121">
    <property type="term" value="C:membrane raft"/>
    <property type="evidence" value="ECO:0000318"/>
    <property type="project" value="GO_Central"/>
</dbReference>
<dbReference type="GO" id="GO:0005654">
    <property type="term" value="C:nucleoplasm"/>
    <property type="evidence" value="ECO:0000314"/>
    <property type="project" value="HPA"/>
</dbReference>
<dbReference type="GO" id="GO:0005886">
    <property type="term" value="C:plasma membrane"/>
    <property type="evidence" value="ECO:0000318"/>
    <property type="project" value="GO_Central"/>
</dbReference>
<dbReference type="GO" id="GO:0098794">
    <property type="term" value="C:postsynapse"/>
    <property type="evidence" value="ECO:0007669"/>
    <property type="project" value="Ensembl"/>
</dbReference>
<dbReference type="GO" id="GO:0005509">
    <property type="term" value="F:calcium ion binding"/>
    <property type="evidence" value="ECO:0007669"/>
    <property type="project" value="InterPro"/>
</dbReference>
<dbReference type="GO" id="GO:0001784">
    <property type="term" value="F:phosphotyrosine residue binding"/>
    <property type="evidence" value="ECO:0007669"/>
    <property type="project" value="InterPro"/>
</dbReference>
<dbReference type="GO" id="GO:0030971">
    <property type="term" value="F:receptor tyrosine kinase binding"/>
    <property type="evidence" value="ECO:0000318"/>
    <property type="project" value="GO_Central"/>
</dbReference>
<dbReference type="GO" id="GO:0061630">
    <property type="term" value="F:ubiquitin protein ligase activity"/>
    <property type="evidence" value="ECO:0000318"/>
    <property type="project" value="GO_Central"/>
</dbReference>
<dbReference type="GO" id="GO:0008270">
    <property type="term" value="F:zinc ion binding"/>
    <property type="evidence" value="ECO:0000304"/>
    <property type="project" value="ProtInc"/>
</dbReference>
<dbReference type="GO" id="GO:0035739">
    <property type="term" value="P:CD4-positive, alpha-beta T cell proliferation"/>
    <property type="evidence" value="ECO:0007669"/>
    <property type="project" value="Ensembl"/>
</dbReference>
<dbReference type="GO" id="GO:0006955">
    <property type="term" value="P:immune response"/>
    <property type="evidence" value="ECO:0007669"/>
    <property type="project" value="Ensembl"/>
</dbReference>
<dbReference type="GO" id="GO:0035556">
    <property type="term" value="P:intracellular signal transduction"/>
    <property type="evidence" value="ECO:0007669"/>
    <property type="project" value="Ensembl"/>
</dbReference>
<dbReference type="GO" id="GO:2000562">
    <property type="term" value="P:negative regulation of CD4-positive, alpha-beta T cell proliferation"/>
    <property type="evidence" value="ECO:0007669"/>
    <property type="project" value="Ensembl"/>
</dbReference>
<dbReference type="GO" id="GO:0042059">
    <property type="term" value="P:negative regulation of epidermal growth factor receptor signaling pathway"/>
    <property type="evidence" value="ECO:0000318"/>
    <property type="project" value="GO_Central"/>
</dbReference>
<dbReference type="GO" id="GO:0050860">
    <property type="term" value="P:negative regulation of T cell receptor signaling pathway"/>
    <property type="evidence" value="ECO:0007669"/>
    <property type="project" value="Ensembl"/>
</dbReference>
<dbReference type="GO" id="GO:0006607">
    <property type="term" value="P:NLS-bearing protein import into nucleus"/>
    <property type="evidence" value="ECO:0000304"/>
    <property type="project" value="ProtInc"/>
</dbReference>
<dbReference type="GO" id="GO:0045732">
    <property type="term" value="P:positive regulation of protein catabolic process"/>
    <property type="evidence" value="ECO:0007669"/>
    <property type="project" value="Ensembl"/>
</dbReference>
<dbReference type="GO" id="GO:0031398">
    <property type="term" value="P:positive regulation of protein ubiquitination"/>
    <property type="evidence" value="ECO:0007669"/>
    <property type="project" value="Ensembl"/>
</dbReference>
<dbReference type="GO" id="GO:0002669">
    <property type="term" value="P:positive regulation of T cell anergy"/>
    <property type="evidence" value="ECO:0007669"/>
    <property type="project" value="Ensembl"/>
</dbReference>
<dbReference type="GO" id="GO:0030163">
    <property type="term" value="P:protein catabolic process"/>
    <property type="evidence" value="ECO:0007669"/>
    <property type="project" value="Ensembl"/>
</dbReference>
<dbReference type="GO" id="GO:0016567">
    <property type="term" value="P:protein ubiquitination"/>
    <property type="evidence" value="ECO:0007669"/>
    <property type="project" value="UniProtKB-UniPathway"/>
</dbReference>
<dbReference type="GO" id="GO:2000583">
    <property type="term" value="P:regulation of platelet-derived growth factor receptor-alpha signaling pathway"/>
    <property type="evidence" value="ECO:0000250"/>
    <property type="project" value="UniProtKB"/>
</dbReference>
<dbReference type="GO" id="GO:0099149">
    <property type="term" value="P:regulation of postsynaptic neurotransmitter receptor internalization"/>
    <property type="evidence" value="ECO:0007669"/>
    <property type="project" value="Ensembl"/>
</dbReference>
<dbReference type="GO" id="GO:0140252">
    <property type="term" value="P:regulation protein catabolic process at postsynapse"/>
    <property type="evidence" value="ECO:0007669"/>
    <property type="project" value="Ensembl"/>
</dbReference>
<dbReference type="GO" id="GO:0007165">
    <property type="term" value="P:signal transduction"/>
    <property type="evidence" value="ECO:0000318"/>
    <property type="project" value="GO_Central"/>
</dbReference>
<dbReference type="GO" id="GO:0002870">
    <property type="term" value="P:T cell anergy"/>
    <property type="evidence" value="ECO:0007669"/>
    <property type="project" value="Ensembl"/>
</dbReference>
<dbReference type="GO" id="GO:0050852">
    <property type="term" value="P:T cell receptor signaling pathway"/>
    <property type="evidence" value="ECO:0007669"/>
    <property type="project" value="Ensembl"/>
</dbReference>
<dbReference type="CDD" id="cd16709">
    <property type="entry name" value="RING-HC_Cbl-b"/>
    <property type="match status" value="1"/>
</dbReference>
<dbReference type="CDD" id="cd09920">
    <property type="entry name" value="SH2_Cbl-b_TKB"/>
    <property type="match status" value="1"/>
</dbReference>
<dbReference type="CDD" id="cd14392">
    <property type="entry name" value="UBA_Cbl-b"/>
    <property type="match status" value="1"/>
</dbReference>
<dbReference type="FunFam" id="1.10.238.10:FF:000022">
    <property type="entry name" value="E3 ubiquitin-protein ligase CBL"/>
    <property type="match status" value="1"/>
</dbReference>
<dbReference type="FunFam" id="1.20.930.20:FF:000001">
    <property type="entry name" value="E3 ubiquitin-protein ligase CBL"/>
    <property type="match status" value="1"/>
</dbReference>
<dbReference type="FunFam" id="3.30.40.10:FF:000015">
    <property type="entry name" value="E3 ubiquitin-protein ligase CBL"/>
    <property type="match status" value="1"/>
</dbReference>
<dbReference type="FunFam" id="3.30.505.10:FF:000154">
    <property type="entry name" value="E3 ubiquitin-protein ligase CBL"/>
    <property type="match status" value="1"/>
</dbReference>
<dbReference type="FunFam" id="1.10.8.10:FF:000037">
    <property type="entry name" value="E3 ubiquitin-protein ligase CBL-B isoform B"/>
    <property type="match status" value="1"/>
</dbReference>
<dbReference type="Gene3D" id="1.20.930.20">
    <property type="entry name" value="Adaptor protein Cbl, N-terminal domain"/>
    <property type="match status" value="1"/>
</dbReference>
<dbReference type="Gene3D" id="1.10.8.10">
    <property type="entry name" value="DNA helicase RuvA subunit, C-terminal domain"/>
    <property type="match status" value="1"/>
</dbReference>
<dbReference type="Gene3D" id="1.10.238.10">
    <property type="entry name" value="EF-hand"/>
    <property type="match status" value="1"/>
</dbReference>
<dbReference type="Gene3D" id="3.30.505.10">
    <property type="entry name" value="SH2 domain"/>
    <property type="match status" value="1"/>
</dbReference>
<dbReference type="Gene3D" id="3.30.40.10">
    <property type="entry name" value="Zinc/RING finger domain, C3HC4 (zinc finger)"/>
    <property type="match status" value="1"/>
</dbReference>
<dbReference type="IDEAL" id="IID00319"/>
<dbReference type="InterPro" id="IPR024162">
    <property type="entry name" value="Adaptor_Cbl"/>
</dbReference>
<dbReference type="InterPro" id="IPR014741">
    <property type="entry name" value="Adaptor_Cbl_EF_hand-like"/>
</dbReference>
<dbReference type="InterPro" id="IPR036537">
    <property type="entry name" value="Adaptor_Cbl_N_dom_sf"/>
</dbReference>
<dbReference type="InterPro" id="IPR003153">
    <property type="entry name" value="Adaptor_Cbl_N_hlx"/>
</dbReference>
<dbReference type="InterPro" id="IPR014742">
    <property type="entry name" value="Adaptor_Cbl_SH2-like"/>
</dbReference>
<dbReference type="InterPro" id="IPR039520">
    <property type="entry name" value="CBL-B_RING-HC"/>
</dbReference>
<dbReference type="InterPro" id="IPR024159">
    <property type="entry name" value="Cbl_PTB"/>
</dbReference>
<dbReference type="InterPro" id="IPR011992">
    <property type="entry name" value="EF-hand-dom_pair"/>
</dbReference>
<dbReference type="InterPro" id="IPR036860">
    <property type="entry name" value="SH2_dom_sf"/>
</dbReference>
<dbReference type="InterPro" id="IPR015940">
    <property type="entry name" value="UBA"/>
</dbReference>
<dbReference type="InterPro" id="IPR018957">
    <property type="entry name" value="Znf_C3HC4_RING-type"/>
</dbReference>
<dbReference type="InterPro" id="IPR001841">
    <property type="entry name" value="Znf_RING"/>
</dbReference>
<dbReference type="InterPro" id="IPR013083">
    <property type="entry name" value="Znf_RING/FYVE/PHD"/>
</dbReference>
<dbReference type="InterPro" id="IPR017907">
    <property type="entry name" value="Znf_RING_CS"/>
</dbReference>
<dbReference type="PANTHER" id="PTHR23007">
    <property type="entry name" value="CBL"/>
    <property type="match status" value="1"/>
</dbReference>
<dbReference type="PANTHER" id="PTHR23007:SF3">
    <property type="entry name" value="E3 UBIQUITIN-PROTEIN LIGASE CBL-B"/>
    <property type="match status" value="1"/>
</dbReference>
<dbReference type="Pfam" id="PF02262">
    <property type="entry name" value="Cbl_N"/>
    <property type="match status" value="1"/>
</dbReference>
<dbReference type="Pfam" id="PF02761">
    <property type="entry name" value="Cbl_N2"/>
    <property type="match status" value="1"/>
</dbReference>
<dbReference type="Pfam" id="PF02762">
    <property type="entry name" value="Cbl_N3"/>
    <property type="match status" value="1"/>
</dbReference>
<dbReference type="Pfam" id="PF00097">
    <property type="entry name" value="zf-C3HC4"/>
    <property type="match status" value="1"/>
</dbReference>
<dbReference type="SMART" id="SM00184">
    <property type="entry name" value="RING"/>
    <property type="match status" value="1"/>
</dbReference>
<dbReference type="SMART" id="SM00165">
    <property type="entry name" value="UBA"/>
    <property type="match status" value="1"/>
</dbReference>
<dbReference type="SUPFAM" id="SSF47473">
    <property type="entry name" value="EF-hand"/>
    <property type="match status" value="1"/>
</dbReference>
<dbReference type="SUPFAM" id="SSF47668">
    <property type="entry name" value="N-terminal domain of cbl (N-cbl)"/>
    <property type="match status" value="1"/>
</dbReference>
<dbReference type="SUPFAM" id="SSF57850">
    <property type="entry name" value="RING/U-box"/>
    <property type="match status" value="1"/>
</dbReference>
<dbReference type="SUPFAM" id="SSF55550">
    <property type="entry name" value="SH2 domain"/>
    <property type="match status" value="1"/>
</dbReference>
<dbReference type="PROSITE" id="PS51506">
    <property type="entry name" value="CBL_PTB"/>
    <property type="match status" value="1"/>
</dbReference>
<dbReference type="PROSITE" id="PS50030">
    <property type="entry name" value="UBA"/>
    <property type="match status" value="1"/>
</dbReference>
<dbReference type="PROSITE" id="PS00518">
    <property type="entry name" value="ZF_RING_1"/>
    <property type="match status" value="1"/>
</dbReference>
<dbReference type="PROSITE" id="PS50089">
    <property type="entry name" value="ZF_RING_2"/>
    <property type="match status" value="1"/>
</dbReference>
<proteinExistence type="evidence at protein level"/>
<gene>
    <name type="primary">CBLB</name>
    <name type="synonym">RNF56</name>
    <name type="ORF">Nbla00127</name>
</gene>
<organism>
    <name type="scientific">Homo sapiens</name>
    <name type="common">Human</name>
    <dbReference type="NCBI Taxonomy" id="9606"/>
    <lineage>
        <taxon>Eukaryota</taxon>
        <taxon>Metazoa</taxon>
        <taxon>Chordata</taxon>
        <taxon>Craniata</taxon>
        <taxon>Vertebrata</taxon>
        <taxon>Euteleostomi</taxon>
        <taxon>Mammalia</taxon>
        <taxon>Eutheria</taxon>
        <taxon>Euarchontoglires</taxon>
        <taxon>Primates</taxon>
        <taxon>Haplorrhini</taxon>
        <taxon>Catarrhini</taxon>
        <taxon>Hominidae</taxon>
        <taxon>Homo</taxon>
    </lineage>
</organism>
<reference key="1">
    <citation type="journal article" date="1995" name="Oncogene">
        <title>Cloning and characterization of cbl-b: a SH3 binding protein with homology to the c-cbl proto-oncogene.</title>
        <authorList>
            <person name="Keane M.M."/>
            <person name="Rivero-Lezcano O.M."/>
            <person name="Mitchell J.A."/>
            <person name="Robbins K.C."/>
            <person name="Lipkowitz S."/>
        </authorList>
    </citation>
    <scope>NUCLEOTIDE SEQUENCE [MRNA] (ISOFORMS LONG; TRUNCATED 1 AND TRUNCATED 2)</scope>
</reference>
<reference key="2">
    <citation type="journal article" date="1997" name="Oncogene">
        <title>Cbl-b, a member of the Sli-1/c-Cbl protein family, inhibits Vav-mediated c-Jun N-terminal kinase activation.</title>
        <authorList>
            <person name="Bustelo X.R."/>
            <person name="Crespo P."/>
            <person name="Lopez-Barahona M."/>
            <person name="Gutkind J.S."/>
            <person name="Barbacid M."/>
        </authorList>
    </citation>
    <scope>NUCLEOTIDE SEQUENCE [MRNA] (ISOFORM LONG)</scope>
    <scope>TISSUE SPECIFICITY</scope>
    <scope>INTERACTION WITH VAV1</scope>
</reference>
<reference key="3">
    <citation type="submission" date="2005-12" db="EMBL/GenBank/DDBJ databases">
        <title>Cbl-b in Taiwan population.</title>
        <authorList>
            <person name="Shen C.-R."/>
            <person name="Chen Y.-J."/>
            <person name="Pai L.-M."/>
            <person name="Liu C.-L."/>
        </authorList>
    </citation>
    <scope>NUCLEOTIDE SEQUENCE [MRNA] (ISOFORM LONG)</scope>
</reference>
<reference key="4">
    <citation type="journal article" date="2004" name="Nat. Genet.">
        <title>Complete sequencing and characterization of 21,243 full-length human cDNAs.</title>
        <authorList>
            <person name="Ota T."/>
            <person name="Suzuki Y."/>
            <person name="Nishikawa T."/>
            <person name="Otsuki T."/>
            <person name="Sugiyama T."/>
            <person name="Irie R."/>
            <person name="Wakamatsu A."/>
            <person name="Hayashi K."/>
            <person name="Sato H."/>
            <person name="Nagai K."/>
            <person name="Kimura K."/>
            <person name="Makita H."/>
            <person name="Sekine M."/>
            <person name="Obayashi M."/>
            <person name="Nishi T."/>
            <person name="Shibahara T."/>
            <person name="Tanaka T."/>
            <person name="Ishii S."/>
            <person name="Yamamoto J."/>
            <person name="Saito K."/>
            <person name="Kawai Y."/>
            <person name="Isono Y."/>
            <person name="Nakamura Y."/>
            <person name="Nagahari K."/>
            <person name="Murakami K."/>
            <person name="Yasuda T."/>
            <person name="Iwayanagi T."/>
            <person name="Wagatsuma M."/>
            <person name="Shiratori A."/>
            <person name="Sudo H."/>
            <person name="Hosoiri T."/>
            <person name="Kaku Y."/>
            <person name="Kodaira H."/>
            <person name="Kondo H."/>
            <person name="Sugawara M."/>
            <person name="Takahashi M."/>
            <person name="Kanda K."/>
            <person name="Yokoi T."/>
            <person name="Furuya T."/>
            <person name="Kikkawa E."/>
            <person name="Omura Y."/>
            <person name="Abe K."/>
            <person name="Kamihara K."/>
            <person name="Katsuta N."/>
            <person name="Sato K."/>
            <person name="Tanikawa M."/>
            <person name="Yamazaki M."/>
            <person name="Ninomiya K."/>
            <person name="Ishibashi T."/>
            <person name="Yamashita H."/>
            <person name="Murakawa K."/>
            <person name="Fujimori K."/>
            <person name="Tanai H."/>
            <person name="Kimata M."/>
            <person name="Watanabe M."/>
            <person name="Hiraoka S."/>
            <person name="Chiba Y."/>
            <person name="Ishida S."/>
            <person name="Ono Y."/>
            <person name="Takiguchi S."/>
            <person name="Watanabe S."/>
            <person name="Yosida M."/>
            <person name="Hotuta T."/>
            <person name="Kusano J."/>
            <person name="Kanehori K."/>
            <person name="Takahashi-Fujii A."/>
            <person name="Hara H."/>
            <person name="Tanase T.-O."/>
            <person name="Nomura Y."/>
            <person name="Togiya S."/>
            <person name="Komai F."/>
            <person name="Hara R."/>
            <person name="Takeuchi K."/>
            <person name="Arita M."/>
            <person name="Imose N."/>
            <person name="Musashino K."/>
            <person name="Yuuki H."/>
            <person name="Oshima A."/>
            <person name="Sasaki N."/>
            <person name="Aotsuka S."/>
            <person name="Yoshikawa Y."/>
            <person name="Matsunawa H."/>
            <person name="Ichihara T."/>
            <person name="Shiohata N."/>
            <person name="Sano S."/>
            <person name="Moriya S."/>
            <person name="Momiyama H."/>
            <person name="Satoh N."/>
            <person name="Takami S."/>
            <person name="Terashima Y."/>
            <person name="Suzuki O."/>
            <person name="Nakagawa S."/>
            <person name="Senoh A."/>
            <person name="Mizoguchi H."/>
            <person name="Goto Y."/>
            <person name="Shimizu F."/>
            <person name="Wakebe H."/>
            <person name="Hishigaki H."/>
            <person name="Watanabe T."/>
            <person name="Sugiyama A."/>
            <person name="Takemoto M."/>
            <person name="Kawakami B."/>
            <person name="Yamazaki M."/>
            <person name="Watanabe K."/>
            <person name="Kumagai A."/>
            <person name="Itakura S."/>
            <person name="Fukuzumi Y."/>
            <person name="Fujimori Y."/>
            <person name="Komiyama M."/>
            <person name="Tashiro H."/>
            <person name="Tanigami A."/>
            <person name="Fujiwara T."/>
            <person name="Ono T."/>
            <person name="Yamada K."/>
            <person name="Fujii Y."/>
            <person name="Ozaki K."/>
            <person name="Hirao M."/>
            <person name="Ohmori Y."/>
            <person name="Kawabata A."/>
            <person name="Hikiji T."/>
            <person name="Kobatake N."/>
            <person name="Inagaki H."/>
            <person name="Ikema Y."/>
            <person name="Okamoto S."/>
            <person name="Okitani R."/>
            <person name="Kawakami T."/>
            <person name="Noguchi S."/>
            <person name="Itoh T."/>
            <person name="Shigeta K."/>
            <person name="Senba T."/>
            <person name="Matsumura K."/>
            <person name="Nakajima Y."/>
            <person name="Mizuno T."/>
            <person name="Morinaga M."/>
            <person name="Sasaki M."/>
            <person name="Togashi T."/>
            <person name="Oyama M."/>
            <person name="Hata H."/>
            <person name="Watanabe M."/>
            <person name="Komatsu T."/>
            <person name="Mizushima-Sugano J."/>
            <person name="Satoh T."/>
            <person name="Shirai Y."/>
            <person name="Takahashi Y."/>
            <person name="Nakagawa K."/>
            <person name="Okumura K."/>
            <person name="Nagase T."/>
            <person name="Nomura N."/>
            <person name="Kikuchi H."/>
            <person name="Masuho Y."/>
            <person name="Yamashita R."/>
            <person name="Nakai K."/>
            <person name="Yada T."/>
            <person name="Nakamura Y."/>
            <person name="Ohara O."/>
            <person name="Isogai T."/>
            <person name="Sugano S."/>
        </authorList>
    </citation>
    <scope>NUCLEOTIDE SEQUENCE [LARGE SCALE MRNA] (ISOFORM LONG)</scope>
    <source>
        <tissue>Trachea</tissue>
    </source>
</reference>
<reference key="5">
    <citation type="journal article" date="2006" name="Nature">
        <title>The DNA sequence, annotation and analysis of human chromosome 3.</title>
        <authorList>
            <person name="Muzny D.M."/>
            <person name="Scherer S.E."/>
            <person name="Kaul R."/>
            <person name="Wang J."/>
            <person name="Yu J."/>
            <person name="Sudbrak R."/>
            <person name="Buhay C.J."/>
            <person name="Chen R."/>
            <person name="Cree A."/>
            <person name="Ding Y."/>
            <person name="Dugan-Rocha S."/>
            <person name="Gill R."/>
            <person name="Gunaratne P."/>
            <person name="Harris R.A."/>
            <person name="Hawes A.C."/>
            <person name="Hernandez J."/>
            <person name="Hodgson A.V."/>
            <person name="Hume J."/>
            <person name="Jackson A."/>
            <person name="Khan Z.M."/>
            <person name="Kovar-Smith C."/>
            <person name="Lewis L.R."/>
            <person name="Lozado R.J."/>
            <person name="Metzker M.L."/>
            <person name="Milosavljevic A."/>
            <person name="Miner G.R."/>
            <person name="Morgan M.B."/>
            <person name="Nazareth L.V."/>
            <person name="Scott G."/>
            <person name="Sodergren E."/>
            <person name="Song X.-Z."/>
            <person name="Steffen D."/>
            <person name="Wei S."/>
            <person name="Wheeler D.A."/>
            <person name="Wright M.W."/>
            <person name="Worley K.C."/>
            <person name="Yuan Y."/>
            <person name="Zhang Z."/>
            <person name="Adams C.Q."/>
            <person name="Ansari-Lari M.A."/>
            <person name="Ayele M."/>
            <person name="Brown M.J."/>
            <person name="Chen G."/>
            <person name="Chen Z."/>
            <person name="Clendenning J."/>
            <person name="Clerc-Blankenburg K.P."/>
            <person name="Chen R."/>
            <person name="Chen Z."/>
            <person name="Davis C."/>
            <person name="Delgado O."/>
            <person name="Dinh H.H."/>
            <person name="Dong W."/>
            <person name="Draper H."/>
            <person name="Ernst S."/>
            <person name="Fu G."/>
            <person name="Gonzalez-Garay M.L."/>
            <person name="Garcia D.K."/>
            <person name="Gillett W."/>
            <person name="Gu J."/>
            <person name="Hao B."/>
            <person name="Haugen E."/>
            <person name="Havlak P."/>
            <person name="He X."/>
            <person name="Hennig S."/>
            <person name="Hu S."/>
            <person name="Huang W."/>
            <person name="Jackson L.R."/>
            <person name="Jacob L.S."/>
            <person name="Kelly S.H."/>
            <person name="Kube M."/>
            <person name="Levy R."/>
            <person name="Li Z."/>
            <person name="Liu B."/>
            <person name="Liu J."/>
            <person name="Liu W."/>
            <person name="Lu J."/>
            <person name="Maheshwari M."/>
            <person name="Nguyen B.-V."/>
            <person name="Okwuonu G.O."/>
            <person name="Palmeiri A."/>
            <person name="Pasternak S."/>
            <person name="Perez L.M."/>
            <person name="Phelps K.A."/>
            <person name="Plopper F.J."/>
            <person name="Qiang B."/>
            <person name="Raymond C."/>
            <person name="Rodriguez R."/>
            <person name="Saenphimmachak C."/>
            <person name="Santibanez J."/>
            <person name="Shen H."/>
            <person name="Shen Y."/>
            <person name="Subramanian S."/>
            <person name="Tabor P.E."/>
            <person name="Verduzco D."/>
            <person name="Waldron L."/>
            <person name="Wang J."/>
            <person name="Wang J."/>
            <person name="Wang Q."/>
            <person name="Williams G.A."/>
            <person name="Wong G.K.-S."/>
            <person name="Yao Z."/>
            <person name="Zhang J."/>
            <person name="Zhang X."/>
            <person name="Zhao G."/>
            <person name="Zhou J."/>
            <person name="Zhou Y."/>
            <person name="Nelson D."/>
            <person name="Lehrach H."/>
            <person name="Reinhardt R."/>
            <person name="Naylor S.L."/>
            <person name="Yang H."/>
            <person name="Olson M."/>
            <person name="Weinstock G."/>
            <person name="Gibbs R.A."/>
        </authorList>
    </citation>
    <scope>NUCLEOTIDE SEQUENCE [LARGE SCALE GENOMIC DNA]</scope>
</reference>
<reference key="6">
    <citation type="submission" date="2005-09" db="EMBL/GenBank/DDBJ databases">
        <authorList>
            <person name="Mural R.J."/>
            <person name="Istrail S."/>
            <person name="Sutton G.G."/>
            <person name="Florea L."/>
            <person name="Halpern A.L."/>
            <person name="Mobarry C.M."/>
            <person name="Lippert R."/>
            <person name="Walenz B."/>
            <person name="Shatkay H."/>
            <person name="Dew I."/>
            <person name="Miller J.R."/>
            <person name="Flanigan M.J."/>
            <person name="Edwards N.J."/>
            <person name="Bolanos R."/>
            <person name="Fasulo D."/>
            <person name="Halldorsson B.V."/>
            <person name="Hannenhalli S."/>
            <person name="Turner R."/>
            <person name="Yooseph S."/>
            <person name="Lu F."/>
            <person name="Nusskern D.R."/>
            <person name="Shue B.C."/>
            <person name="Zheng X.H."/>
            <person name="Zhong F."/>
            <person name="Delcher A.L."/>
            <person name="Huson D.H."/>
            <person name="Kravitz S.A."/>
            <person name="Mouchard L."/>
            <person name="Reinert K."/>
            <person name="Remington K.A."/>
            <person name="Clark A.G."/>
            <person name="Waterman M.S."/>
            <person name="Eichler E.E."/>
            <person name="Adams M.D."/>
            <person name="Hunkapiller M.W."/>
            <person name="Myers E.W."/>
            <person name="Venter J.C."/>
        </authorList>
    </citation>
    <scope>NUCLEOTIDE SEQUENCE [LARGE SCALE GENOMIC DNA]</scope>
</reference>
<reference key="7">
    <citation type="journal article" date="2004" name="Genome Res.">
        <title>The status, quality, and expansion of the NIH full-length cDNA project: the Mammalian Gene Collection (MGC).</title>
        <authorList>
            <consortium name="The MGC Project Team"/>
        </authorList>
    </citation>
    <scope>NUCLEOTIDE SEQUENCE [LARGE SCALE MRNA] (ISOFORM LONG)</scope>
    <scope>VARIANT LYS-584</scope>
    <source>
        <tissue>Testis</tissue>
    </source>
</reference>
<reference key="8">
    <citation type="journal article" date="2003" name="Cancer Lett.">
        <title>Neuroblastoma oligo-capping cDNA project: toward the understanding of the genesis and biology of neuroblastoma.</title>
        <authorList>
            <person name="Ohira M."/>
            <person name="Morohashi A."/>
            <person name="Nakamura Y."/>
            <person name="Isogai E."/>
            <person name="Furuya K."/>
            <person name="Hamano S."/>
            <person name="Machida T."/>
            <person name="Aoyama M."/>
            <person name="Fukumura M."/>
            <person name="Miyazaki K."/>
            <person name="Suzuki Y."/>
            <person name="Sugano S."/>
            <person name="Hirato J."/>
            <person name="Nakagawara A."/>
        </authorList>
    </citation>
    <scope>NUCLEOTIDE SEQUENCE [LARGE SCALE MRNA] OF 543-982 (ISOFORM LONG)</scope>
    <source>
        <tissue>Neuroblastoma</tissue>
    </source>
</reference>
<reference key="9">
    <citation type="journal article" date="2007" name="BMC Genomics">
        <title>The full-ORF clone resource of the German cDNA consortium.</title>
        <authorList>
            <person name="Bechtel S."/>
            <person name="Rosenfelder H."/>
            <person name="Duda A."/>
            <person name="Schmidt C.P."/>
            <person name="Ernst U."/>
            <person name="Wellenreuther R."/>
            <person name="Mehrle A."/>
            <person name="Schuster C."/>
            <person name="Bahr A."/>
            <person name="Bloecker H."/>
            <person name="Heubner D."/>
            <person name="Hoerlein A."/>
            <person name="Michel G."/>
            <person name="Wedler H."/>
            <person name="Koehrer K."/>
            <person name="Ottenwaelder B."/>
            <person name="Poustka A."/>
            <person name="Wiemann S."/>
            <person name="Schupp I."/>
        </authorList>
    </citation>
    <scope>NUCLEOTIDE SEQUENCE [LARGE SCALE MRNA] OF 857-982 (ISOFORM LONG)</scope>
    <source>
        <tissue>Small intestine</tissue>
    </source>
</reference>
<reference key="10">
    <citation type="journal article" date="1999" name="Oncogene">
        <title>Tyrosine phosphorylation and complex formation of Cbl-b upon T cell receptor stimulation.</title>
        <authorList>
            <person name="Elly C."/>
            <person name="Witte S."/>
            <person name="Zhang Z."/>
            <person name="Rosnet O."/>
            <person name="Lipkowitz S."/>
            <person name="Altman A."/>
            <person name="Liu Y.-C."/>
        </authorList>
    </citation>
    <scope>TISSUE SPECIFICITY</scope>
    <scope>MUTAGENESIS OF GLY-298; TYR-665 AND TYR-709</scope>
    <scope>INTERACTION WITH GRB2 AND CRKL</scope>
    <scope>PHOSPHORYLATION AT TYR-665 AND TYR-709</scope>
    <scope>FUNCTION</scope>
</reference>
<reference key="11">
    <citation type="journal article" date="1999" name="Oncogene">
        <title>cbl-b inhibits epidermal growth factor receptor signaling.</title>
        <authorList>
            <person name="Ettenberg S.A."/>
            <person name="Keane M.M."/>
            <person name="Nau M.M."/>
            <person name="Frankel M."/>
            <person name="Wang L.-M."/>
            <person name="Pierce J.H."/>
            <person name="Lipkowitz S."/>
        </authorList>
    </citation>
    <scope>FUNCTION</scope>
    <scope>PHOSPHORYLATION</scope>
    <scope>INTERACTION WITH GRB2 AND PIK3R1</scope>
</reference>
<reference key="12">
    <citation type="journal article" date="2001" name="J. Biol. Chem.">
        <title>Cbl-b, a RING-type E3 ubiquitin ligase, targets phosphatidylinositol 3-kinase for ubiquitination in T cells.</title>
        <authorList>
            <person name="Fang D."/>
            <person name="Wang H.-Y."/>
            <person name="Fang N."/>
            <person name="Altman Y."/>
            <person name="Elly C."/>
            <person name="Liu Y.-C."/>
        </authorList>
    </citation>
    <scope>FUNCTION</scope>
    <scope>INTERACTION WITH PIK3R1</scope>
    <scope>MUTAGENESIS OF GLY-298 AND CYS-373</scope>
</reference>
<reference key="13">
    <citation type="journal article" date="2001" name="J. Biol. Chem.">
        <title>Cbl-b-dependent coordinated degradation of the epidermal growth factor receptor signaling complex.</title>
        <authorList>
            <person name="Ettenberg S.A."/>
            <person name="Magnifico A."/>
            <person name="Cuello M."/>
            <person name="Nau M.M."/>
            <person name="Rubinstein Y.R."/>
            <person name="Yarden Y."/>
            <person name="Weissman A.M."/>
            <person name="Lipkowitz S."/>
        </authorList>
    </citation>
    <scope>UBIQUITINATION</scope>
    <scope>MUTAGENESIS OF CYS-373</scope>
</reference>
<reference key="14">
    <citation type="journal article" date="2001" name="Nat. Immunol.">
        <title>Proteolysis-independent regulation of PI3K by Cbl-b-mediated ubiquitination in T cells.</title>
        <authorList>
            <person name="Fang D."/>
            <person name="Liu Y.-C."/>
        </authorList>
    </citation>
    <scope>FUNCTION</scope>
</reference>
<reference key="15">
    <citation type="journal article" date="2002" name="J. Biol. Chem.">
        <title>CIN85 participates in Cbl-b-mediated down-regulation of receptor tyrosine kinases.</title>
        <authorList>
            <person name="Szymkiewicz I."/>
            <person name="Kowanetz K."/>
            <person name="Soubeyran P."/>
            <person name="Dinarina A."/>
            <person name="Lipkowitz S."/>
            <person name="Dikic I."/>
        </authorList>
    </citation>
    <scope>INTERACTION WITH SH3KBP1</scope>
    <scope>SUBCELLULAR LOCATION</scope>
</reference>
<reference key="16">
    <citation type="journal article" date="2004" name="Oncogene">
        <title>Cbl-c suppresses v-Src-induced transformation through ubiquitin-dependent protein degradation.</title>
        <authorList>
            <person name="Kim M."/>
            <person name="Tezuka T."/>
            <person name="Tanaka K."/>
            <person name="Yamamoto T."/>
        </authorList>
    </citation>
    <scope>FUNCTION</scope>
    <scope>CATALYTIC ACTIVITY</scope>
</reference>
<reference key="17">
    <citation type="journal article" date="2004" name="Oncogene">
        <title>Cbl-b interacts with ubiquitinated proteins; differential functions of the UBA domains of c-Cbl and Cbl-b.</title>
        <authorList>
            <person name="Davies G.C."/>
            <person name="Ettenberg S.A."/>
            <person name="Coats A.O."/>
            <person name="Mussante M."/>
            <person name="Ravichandran S."/>
            <person name="Collins J."/>
            <person name="Nau M.M."/>
            <person name="Lipkowitz S."/>
        </authorList>
    </citation>
    <scope>INTERACTION WITH UBIQUITINATED PROTEINS</scope>
    <scope>MUTAGENESIS OF 943-GLY-TYR-944 AND LEU-967</scope>
</reference>
<reference key="18">
    <citation type="journal article" date="2006" name="Cell">
        <title>Global, in vivo, and site-specific phosphorylation dynamics in signaling networks.</title>
        <authorList>
            <person name="Olsen J.V."/>
            <person name="Blagoev B."/>
            <person name="Gnad F."/>
            <person name="Macek B."/>
            <person name="Kumar C."/>
            <person name="Mortensen P."/>
            <person name="Mann M."/>
        </authorList>
    </citation>
    <scope>IDENTIFICATION BY MASS SPECTROMETRY [LARGE SCALE ANALYSIS]</scope>
    <source>
        <tissue>Cervix carcinoma</tissue>
    </source>
</reference>
<reference key="19">
    <citation type="journal article" date="2008" name="Proc. Natl. Acad. Sci. U.S.A.">
        <title>A quantitative atlas of mitotic phosphorylation.</title>
        <authorList>
            <person name="Dephoure N."/>
            <person name="Zhou C."/>
            <person name="Villen J."/>
            <person name="Beausoleil S.A."/>
            <person name="Bakalarski C.E."/>
            <person name="Elledge S.J."/>
            <person name="Gygi S.P."/>
        </authorList>
    </citation>
    <scope>PHOSPHORYLATION [LARGE SCALE ANALYSIS] AT SER-521; SER-525 AND SER-529</scope>
    <scope>IDENTIFICATION BY MASS SPECTROMETRY [LARGE SCALE ANALYSIS]</scope>
    <source>
        <tissue>Cervix carcinoma</tissue>
    </source>
</reference>
<reference key="20">
    <citation type="journal article" date="2009" name="Sci. Signal.">
        <title>PKC-theta modulates the strength of T cell responses by targeting Cbl-b for ubiquitination and degradation.</title>
        <authorList>
            <person name="Gruber T."/>
            <person name="Hermann-Kleiter N."/>
            <person name="Hinterleitner R."/>
            <person name="Fresser F."/>
            <person name="Schneider R."/>
            <person name="Gastl G."/>
            <person name="Penninger J.M."/>
            <person name="Baier G."/>
        </authorList>
    </citation>
    <scope>PHOSPHORYLATION AT SER-282</scope>
</reference>
<reference key="21">
    <citation type="journal article" date="2010" name="J. Biol. Chem.">
        <title>The N terminus of Cbl-c regulates ubiquitin ligase activity by modulating affinity for the ubiquitin-conjugating enzyme.</title>
        <authorList>
            <person name="Ryan P.E."/>
            <person name="Sivadasan-Nair N."/>
            <person name="Nau M.M."/>
            <person name="Nicholas S."/>
            <person name="Lipkowitz S."/>
        </authorList>
    </citation>
    <scope>FUNCTION AS E3 UBIQUITIN-PROTEIN LIGASE</scope>
    <scope>CATALYTIC ACTIVITY</scope>
    <scope>PHOSPHORYLATION AT TYR-363</scope>
    <scope>MUTAGENESIS OF TYR-363</scope>
</reference>
<reference key="22">
    <citation type="journal article" date="2018" name="J. Cell Biol.">
        <title>IFT20 modulates ciliary PDGFRalpha signaling by regulating the stability of Cbl E3 ubiquitin ligases.</title>
        <authorList>
            <person name="Schmid F.M."/>
            <person name="Schou K.B."/>
            <person name="Vilhelm M.J."/>
            <person name="Holm M.S."/>
            <person name="Breslin L."/>
            <person name="Farinelli P."/>
            <person name="Larsen L.A."/>
            <person name="Andersen J.S."/>
            <person name="Pedersen L.B."/>
            <person name="Christensen S.T."/>
        </authorList>
    </citation>
    <scope>INDUCTION</scope>
    <scope>INTERACTION WITH IFT20 AND CBL</scope>
</reference>
<reference key="23">
    <citation type="journal article" date="2022" name="J. Clin. Invest.">
        <title>Immune dysregulation caused by homozygous mutations in CBLB.</title>
        <authorList>
            <person name="Janssen E."/>
            <person name="Peters Z."/>
            <person name="Alosaimi M.F."/>
            <person name="Smith E."/>
            <person name="Milin E."/>
            <person name="Stafstrom K."/>
            <person name="Wallace J.G."/>
            <person name="Platt C.D."/>
            <person name="Chou J."/>
            <person name="El Ansari Y.S."/>
            <person name="Al Farsi T."/>
            <person name="Ameziane N."/>
            <person name="Al-Ali R."/>
            <person name="Calvo M."/>
            <person name="Rocha M.E."/>
            <person name="Bauer P."/>
            <person name="Al-Sannaa N.A."/>
            <person name="Al Sukaiti N.F."/>
            <person name="Alangari A.A."/>
            <person name="Bertoli-Avella A.M."/>
            <person name="Geha R.S."/>
        </authorList>
    </citation>
    <scope>INVOLVEMENT IN ADMIO3</scope>
    <scope>VARIANTS ADMIO3 LEU-257; TRP-436 AND 468-VAL--LEU-982 DEL</scope>
</reference>
<reference key="24">
    <citation type="journal article" date="2005" name="Nat. Struct. Mol. Biol.">
        <title>Cbl promotes clustering of endocytic adaptor proteins.</title>
        <authorList>
            <person name="Jozic D."/>
            <person name="Cardenes N."/>
            <person name="Deribe Y.L."/>
            <person name="Moncalian G."/>
            <person name="Hoeller D."/>
            <person name="Groemping Y."/>
            <person name="Dikic I."/>
            <person name="Rittinger K."/>
            <person name="Bravo J."/>
        </authorList>
    </citation>
    <scope>X-RAY CRYSTALLOGRAPHY (1.85 ANGSTROMS) OF 899-914 IN COMPLEXES WITH SH3KBP1 AND ARHGEF7</scope>
    <scope>MUTAGENESIS OF ARG-904 AND ARG-911</scope>
    <scope>SUBUNIT</scope>
</reference>
<reference key="25">
    <citation type="journal article" date="2006" name="J. Biol. Chem.">
        <title>Atypical polyproline recognition by the CMS N-terminal Src homology 3 domain.</title>
        <authorList>
            <person name="Moncalian G."/>
            <person name="Cardenes N."/>
            <person name="Deribe Y.L."/>
            <person name="Spinola-Amilibia M."/>
            <person name="Dikic I."/>
            <person name="Bravo J."/>
        </authorList>
    </citation>
    <scope>X-RAY CRYSTALLOGRAPHY (1.7 ANGSTROMS) OF 902-912 IN COMPLEX WITH CD2AP</scope>
    <scope>MUTAGENESIS OF ARG-904; LYS-907 AND ARG-911</scope>
    <scope>SUBUNIT</scope>
</reference>
<reference key="26">
    <citation type="journal article" date="2007" name="Mol. Cell">
        <title>Structural basis for ubiquitin-mediated dimerization and activation of the ubiquitin protein ligase Cbl-b.</title>
        <authorList>
            <person name="Peschard P."/>
            <person name="Kozlov G."/>
            <person name="Lin T."/>
            <person name="Mirza I.A."/>
            <person name="Berghuis A.M."/>
            <person name="Lipkowitz S."/>
            <person name="Park M."/>
            <person name="Gehring K."/>
        </authorList>
    </citation>
    <scope>X-RAY CRYSTALLOGRAPHY (1.56 ANGSTROMS) OF 924-973 IN COMPLEX WITH UBIQUITIN</scope>
    <scope>STRUCTURE BY NMR OF 924-973</scope>
    <scope>TYROSINE PHOSPHORYLATION</scope>
    <scope>MUTAGENESIS OF ALA-937; MET-940; PHE-946 AND ILE-966</scope>
</reference>
<reference key="27">
    <citation type="submission" date="2007-05" db="PDB data bank">
        <title>Solution structure of RSGI RUH-065, a UBA domain from human cDNA.</title>
        <authorList>
            <consortium name="RIKEN structural genomics initiative (RSGI)"/>
        </authorList>
    </citation>
    <scope>STRUCTURE BY NMR OF 931-970</scope>
</reference>
<reference key="28">
    <citation type="submission" date="2010-10" db="PDB data bank">
        <title>Crystal structure of Cbl-b TKB domain in complex with EGFR pY1069 peptide.</title>
        <authorList>
            <consortium name="Structural genomics consortium (SGC)"/>
        </authorList>
    </citation>
    <scope>X-RAY CRYSTALLOGRAPHY (2.27 ANGSTROMS) OF 38-344 IN COMPLEX WITH PHOSPHO-EGFR PEPTIDE</scope>
    <scope>INTERACTION WITH EGFR</scope>
    <scope>HETERODIMER</scope>
</reference>
<comment type="function">
    <text evidence="3 9 10 11 13 15 22">E3 ubiquitin-protein ligase which accepts ubiquitin from specific E2 ubiquitin-conjugating enzymes, and transfers it to substrates, generally promoting their degradation by the proteasome. Negatively regulates TCR (T-cell receptor), BCR (B-cell receptor) and FCER1 (high affinity immunoglobulin epsilon receptor) signal transduction pathways. In naive T-cells, inhibits VAV1 activation upon TCR engagement and imposes a requirement for CD28 costimulation for proliferation and IL-2 production. Also acts by promoting PIK3R1/p85 ubiquitination, which impairs its recruitment to the TCR and subsequent activation. In activated T-cells, inhibits PLCG1 activation and calcium mobilization upon restimulation and promotes anergy. In B-cells, acts by ubiquitinating SYK and promoting its proteasomal degradation. Slightly promotes SRC ubiquitination. May be involved in EGFR ubiquitination and internalization. May be functionally coupled with the E2 ubiquitin-protein ligase UB2D3. In association with CBL, required for proper feedback inhibition of ciliary platelet-derived growth factor receptor-alpha (PDGFRA) signaling pathway via ubiquitination and internalization of PDGFRA (By similarity).</text>
</comment>
<comment type="catalytic activity">
    <reaction evidence="15 22">
        <text>S-ubiquitinyl-[E2 ubiquitin-conjugating enzyme]-L-cysteine + [acceptor protein]-L-lysine = [E2 ubiquitin-conjugating enzyme]-L-cysteine + N(6)-ubiquitinyl-[acceptor protein]-L-lysine.</text>
        <dbReference type="EC" id="2.3.2.27"/>
    </reaction>
</comment>
<comment type="pathway">
    <text>Protein modification; protein ubiquitination.</text>
</comment>
<comment type="subunit">
    <text evidence="9 10 11 14 16 18 19 20 23 25 26">Interacts with SH3 domain-containing proteins LCK, CRK and SORBS1. Interacts with LCP2 and ZAP70. Interacts with CBL (PubMed:29237719). Interacts with SH3 domain-containing proteins VAV1, FYN, FGR, PLCG1, GRB2, CRKL, PIK3R1 and SH3KBP1/CIN85. Identified in heterotrimeric complexes with SH3KBP1/CIN85, CD2AP and ARHGEF7, where one CBLB peptide binds two copies of the other protein. Interacts with poly-ubiquitinated proteins. Dimerization is required for the binding of poly-ubiquitin, but not for the binding of mono-ubiquitin. Interacts with EGFR (phosphorylated). Interacts with IFT20 (PubMed:29237719).</text>
</comment>
<comment type="interaction">
    <interactant intactId="EBI-744027">
        <id>Q13191</id>
    </interactant>
    <interactant intactId="EBI-375446">
        <id>Q8IZP0</id>
        <label>ABI1</label>
    </interactant>
    <organismsDiffer>false</organismsDiffer>
    <experiments>2</experiments>
</comment>
<comment type="interaction">
    <interactant intactId="EBI-744027">
        <id>Q13191</id>
    </interactant>
    <interactant intactId="EBI-346622">
        <id>Q9ULH1</id>
        <label>ASAP1</label>
    </interactant>
    <organismsDiffer>false</organismsDiffer>
    <experiments>2</experiments>
</comment>
<comment type="interaction">
    <interactant intactId="EBI-744027">
        <id>Q13191</id>
    </interactant>
    <interactant intactId="EBI-298152">
        <id>Q9Y5K6</id>
        <label>CD2AP</label>
    </interactant>
    <organismsDiffer>false</organismsDiffer>
    <experiments>11</experiments>
</comment>
<comment type="interaction">
    <interactant intactId="EBI-744027">
        <id>Q13191</id>
    </interactant>
    <interactant intactId="EBI-886">
        <id>P46108</id>
        <label>CRK</label>
    </interactant>
    <organismsDiffer>false</organismsDiffer>
    <experiments>5</experiments>
</comment>
<comment type="interaction">
    <interactant intactId="EBI-744027">
        <id>Q13191</id>
    </interactant>
    <interactant intactId="EBI-910">
        <id>P46109</id>
        <label>CRKL</label>
    </interactant>
    <organismsDiffer>false</organismsDiffer>
    <experiments>4</experiments>
</comment>
<comment type="interaction">
    <interactant intactId="EBI-744027">
        <id>Q13191</id>
    </interactant>
    <interactant intactId="EBI-1053164">
        <id>O75190</id>
        <label>DNAJB6</label>
    </interactant>
    <organismsDiffer>false</organismsDiffer>
    <experiments>3</experiments>
</comment>
<comment type="interaction">
    <interactant intactId="EBI-744027">
        <id>Q13191</id>
    </interactant>
    <interactant intactId="EBI-750300">
        <id>Q01658</id>
        <label>DR1</label>
    </interactant>
    <organismsDiffer>false</organismsDiffer>
    <experiments>3</experiments>
</comment>
<comment type="interaction">
    <interactant intactId="EBI-744027">
        <id>Q13191</id>
    </interactant>
    <interactant intactId="EBI-400434">
        <id>P35637</id>
        <label>FUS</label>
    </interactant>
    <organismsDiffer>false</organismsDiffer>
    <experiments>3</experiments>
</comment>
<comment type="interaction">
    <interactant intactId="EBI-744027">
        <id>Q13191</id>
    </interactant>
    <interactant intactId="EBI-10691738">
        <id>P06241-3</id>
        <label>FYN</label>
    </interactant>
    <organismsDiffer>false</organismsDiffer>
    <experiments>4</experiments>
</comment>
<comment type="interaction">
    <interactant intactId="EBI-744027">
        <id>Q13191</id>
    </interactant>
    <interactant intactId="EBI-374781">
        <id>O76003</id>
        <label>GLRX3</label>
    </interactant>
    <organismsDiffer>false</organismsDiffer>
    <experiments>3</experiments>
</comment>
<comment type="interaction">
    <interactant intactId="EBI-744027">
        <id>Q13191</id>
    </interactant>
    <interactant intactId="EBI-739467">
        <id>Q9H8Y8</id>
        <label>GORASP2</label>
    </interactant>
    <organismsDiffer>false</organismsDiffer>
    <experiments>8</experiments>
</comment>
<comment type="interaction">
    <interactant intactId="EBI-744027">
        <id>Q13191</id>
    </interactant>
    <interactant intactId="EBI-401755">
        <id>P62993</id>
        <label>GRB2</label>
    </interactant>
    <organismsDiffer>false</organismsDiffer>
    <experiments>30</experiments>
</comment>
<comment type="interaction">
    <interactant intactId="EBI-744027">
        <id>Q13191</id>
    </interactant>
    <interactant intactId="EBI-389564">
        <id>Q00403</id>
        <label>GTF2B</label>
    </interactant>
    <organismsDiffer>false</organismsDiffer>
    <experiments>3</experiments>
</comment>
<comment type="interaction">
    <interactant intactId="EBI-744027">
        <id>Q13191</id>
    </interactant>
    <interactant intactId="EBI-1054873">
        <id>Q9Y5Q9</id>
        <label>GTF3C3</label>
    </interactant>
    <organismsDiffer>false</organismsDiffer>
    <experiments>3</experiments>
</comment>
<comment type="interaction">
    <interactant intactId="EBI-744027">
        <id>Q13191</id>
    </interactant>
    <interactant intactId="EBI-5323863">
        <id>Q5S007</id>
        <label>LRRK2</label>
    </interactant>
    <organismsDiffer>false</organismsDiffer>
    <experiments>4</experiments>
</comment>
<comment type="interaction">
    <interactant intactId="EBI-744027">
        <id>Q13191</id>
    </interactant>
    <interactant intactId="EBI-389883">
        <id>P16333</id>
        <label>NCK1</label>
    </interactant>
    <organismsDiffer>false</organismsDiffer>
    <experiments>4</experiments>
</comment>
<comment type="interaction">
    <interactant intactId="EBI-744027">
        <id>Q13191</id>
    </interactant>
    <interactant intactId="EBI-713635">
        <id>O43639</id>
        <label>NCK2</label>
    </interactant>
    <organismsDiffer>false</organismsDiffer>
    <experiments>9</experiments>
</comment>
<comment type="interaction">
    <interactant intactId="EBI-744027">
        <id>Q13191</id>
    </interactant>
    <interactant intactId="EBI-1014514">
        <id>P35240-4</id>
        <label>NF2</label>
    </interactant>
    <organismsDiffer>false</organismsDiffer>
    <experiments>3</experiments>
</comment>
<comment type="interaction">
    <interactant intactId="EBI-744027">
        <id>Q13191</id>
    </interactant>
    <interactant intactId="EBI-78458">
        <id>P55345</id>
        <label>PRMT2</label>
    </interactant>
    <organismsDiffer>false</organismsDiffer>
    <experiments>3</experiments>
</comment>
<comment type="interaction">
    <interactant intactId="EBI-744027">
        <id>Q13191</id>
    </interactant>
    <interactant intactId="EBI-1383632">
        <id>Q13882</id>
        <label>PTK6</label>
    </interactant>
    <organismsDiffer>false</organismsDiffer>
    <experiments>3</experiments>
</comment>
<comment type="interaction">
    <interactant intactId="EBI-744027">
        <id>Q13191</id>
    </interactant>
    <interactant intactId="EBI-346595">
        <id>Q96B97</id>
        <label>SH3KBP1</label>
    </interactant>
    <organismsDiffer>false</organismsDiffer>
    <experiments>22</experiments>
</comment>
<comment type="interaction">
    <interactant intactId="EBI-744027">
        <id>Q13191</id>
    </interactant>
    <interactant intactId="EBI-990792">
        <id>P00441</id>
        <label>SOD1</label>
    </interactant>
    <organismsDiffer>false</organismsDiffer>
    <experiments>3</experiments>
</comment>
<comment type="interaction">
    <interactant intactId="EBI-744027">
        <id>Q13191</id>
    </interactant>
    <interactant intactId="EBI-12037893">
        <id>O94875-10</id>
        <label>SORBS2</label>
    </interactant>
    <organismsDiffer>false</organismsDiffer>
    <experiments>3</experiments>
</comment>
<comment type="interaction">
    <interactant intactId="EBI-744027">
        <id>Q13191</id>
    </interactant>
    <interactant intactId="EBI-25912847">
        <id>Q6NUL7</id>
        <label>SPTLC1</label>
    </interactant>
    <organismsDiffer>false</organismsDiffer>
    <experiments>3</experiments>
</comment>
<comment type="interaction">
    <interactant intactId="EBI-744027">
        <id>Q13191</id>
    </interactant>
    <interactant intactId="EBI-372899">
        <id>Q13148</id>
        <label>TARDBP</label>
    </interactant>
    <organismsDiffer>false</organismsDiffer>
    <experiments>6</experiments>
</comment>
<comment type="interaction">
    <interactant intactId="EBI-744027">
        <id>Q13191</id>
    </interactant>
    <interactant intactId="EBI-7353612">
        <id>P57075-2</id>
        <label>UBASH3A</label>
    </interactant>
    <organismsDiffer>false</organismsDiffer>
    <experiments>3</experiments>
</comment>
<comment type="interaction">
    <interactant intactId="EBI-744027">
        <id>Q13191</id>
    </interactant>
    <interactant intactId="EBI-1380492">
        <id>Q8TF42</id>
        <label>UBASH3B</label>
    </interactant>
    <organismsDiffer>false</organismsDiffer>
    <experiments>6</experiments>
</comment>
<comment type="interaction">
    <interactant intactId="EBI-744027">
        <id>Q13191</id>
    </interactant>
    <interactant intactId="EBI-297568">
        <id>Q9UKW4</id>
        <label>VAV3</label>
    </interactant>
    <organismsDiffer>false</organismsDiffer>
    <experiments>3</experiments>
</comment>
<comment type="interaction">
    <interactant intactId="EBI-744027">
        <id>Q13191</id>
    </interactant>
    <interactant intactId="EBI-7207091">
        <id>O14972</id>
        <label>VPS26C</label>
    </interactant>
    <organismsDiffer>false</organismsDiffer>
    <experiments>3</experiments>
</comment>
<comment type="interaction">
    <interactant intactId="EBI-744027">
        <id>Q13191</id>
    </interactant>
    <interactant intactId="EBI-515331">
        <id>P07947</id>
        <label>YES1</label>
    </interactant>
    <organismsDiffer>false</organismsDiffer>
    <experiments>3</experiments>
</comment>
<comment type="interaction">
    <interactant intactId="EBI-15555129">
        <id>Q13191-1</id>
    </interactant>
    <interactant intactId="EBI-7006141">
        <id>Q9BXL7</id>
        <label>CARD11</label>
    </interactant>
    <organismsDiffer>false</organismsDiffer>
    <experiments>4</experiments>
</comment>
<comment type="interaction">
    <interactant intactId="EBI-15555129">
        <id>Q13191-1</id>
    </interactant>
    <interactant intactId="EBI-7585212">
        <id>Q96B97-1</id>
        <label>SH3KBP1</label>
    </interactant>
    <organismsDiffer>false</organismsDiffer>
    <experiments>3</experiments>
</comment>
<comment type="interaction">
    <interactant intactId="EBI-15555129">
        <id>Q13191-1</id>
    </interactant>
    <interactant intactId="EBI-347677">
        <id>P62837</id>
        <label>UBE2D2</label>
    </interactant>
    <organismsDiffer>false</organismsDiffer>
    <experiments>2</experiments>
</comment>
<comment type="interaction">
    <interactant intactId="EBI-15555129">
        <id>Q13191-1</id>
    </interactant>
    <interactant intactId="EBI-3649585">
        <id>O55043</id>
        <label>Arhgef7</label>
    </interactant>
    <organismsDiffer>true</organismsDiffer>
    <experiments>2</experiments>
</comment>
<comment type="subcellular location">
    <subcellularLocation>
        <location evidence="14">Cytoplasm</location>
    </subcellularLocation>
    <text>Upon EGF stimulation, associates with endocytic vesicles.</text>
</comment>
<comment type="alternative products">
    <event type="alternative splicing"/>
    <isoform>
        <id>Q13191-1</id>
        <name>Long</name>
        <sequence type="displayed"/>
    </isoform>
    <isoform>
        <id>Q13191-2</id>
        <name>Truncated 1</name>
        <sequence type="described" ref="VSP_005729"/>
    </isoform>
    <isoform>
        <id>Q13191-3</id>
        <name>Truncated 2</name>
        <sequence type="described" ref="VSP_005730 VSP_005731"/>
    </isoform>
</comment>
<comment type="tissue specificity">
    <text evidence="9 25">Expressed in placenta, heart, lung, kidney, spleen, ovary and testis, as well as fetal brain and liver and hematopoietic cell lines, but not in adult brain, liver, pancreas, salivary gland, or skeletal muscle. Present in lymphocytes (at protein level).</text>
</comment>
<comment type="induction">
    <text evidence="23">By serum starvation.</text>
</comment>
<comment type="domain">
    <text>The N-terminus is composed of the phosphotyrosine binding (PTB) domain, a short linker region and the RING-type zinc finger. The PTB domain, which is also called TKB (tyrosine kinase binding) domain, is composed of three different subdomains: a four-helix bundle (4H), a calcium-binding EF hand and a divergent SH2 domain.</text>
</comment>
<comment type="domain">
    <text>The RING-type zinc finger domain mediates binding to an E2 ubiquitin-conjugating enzyme.</text>
</comment>
<comment type="domain">
    <text>The UBA domain interacts with poly-ubiquitinated proteins.</text>
</comment>
<comment type="PTM">
    <text evidence="9 10 21 22">Phosphorylated on tyrosine and serine residues upon TCR or BCR activation, and upon various types of cell stimulation.</text>
</comment>
<comment type="PTM">
    <text evidence="12">Auto-ubiquitinated upon EGF-mediated cell activation or upon T-cell costimulation by CD28; which promotes proteasomal degradation.</text>
</comment>
<comment type="disease" evidence="24">
    <disease id="DI-06710">
        <name>Autoimmune disease, multisystem, infantile-onset, 3</name>
        <acronym>ADMIO3</acronym>
        <description>An autosomal recessive disorder characterized by autoimmune manifestations apparent in the first months or years of life. Clinical features may include hypothyroidism, type 1 diabetes mellitus, systemic inflammatory manifestations such as fever and hepatomegaly, and autoimmune cytopenias.</description>
        <dbReference type="MIM" id="620430"/>
    </disease>
    <text>The disease is caused by variants affecting the gene represented in this entry.</text>
</comment>
<comment type="miscellaneous">
    <text evidence="1">This protein has one functional calcium-binding site.</text>
</comment>
<comment type="sequence caution" evidence="28">
    <conflict type="erroneous termination">
        <sequence resource="EMBL-CDS" id="BAE45748"/>
    </conflict>
    <text>Truncated C-terminus.</text>
</comment>
<comment type="sequence caution" evidence="28">
    <conflict type="miscellaneous discrepancy">
        <sequence resource="EMBL-CDS" id="CAH56175"/>
    </conflict>
    <text>Probable cloning artifact.</text>
</comment>
<comment type="online information" name="Atlas of Genetics and Cytogenetics in Oncology and Haematology">
    <link uri="https://atlasgeneticsoncology.org/gene/193/CBLb"/>
</comment>
<evidence type="ECO:0000250" key="1"/>
<evidence type="ECO:0000250" key="2">
    <source>
        <dbReference type="UniProtKB" id="P22681"/>
    </source>
</evidence>
<evidence type="ECO:0000250" key="3">
    <source>
        <dbReference type="UniProtKB" id="Q3TTA7"/>
    </source>
</evidence>
<evidence type="ECO:0000250" key="4">
    <source>
        <dbReference type="UniProtKB" id="Q8K4S7"/>
    </source>
</evidence>
<evidence type="ECO:0000255" key="5">
    <source>
        <dbReference type="PROSITE-ProRule" id="PRU00175"/>
    </source>
</evidence>
<evidence type="ECO:0000255" key="6">
    <source>
        <dbReference type="PROSITE-ProRule" id="PRU00212"/>
    </source>
</evidence>
<evidence type="ECO:0000255" key="7">
    <source>
        <dbReference type="PROSITE-ProRule" id="PRU00839"/>
    </source>
</evidence>
<evidence type="ECO:0000256" key="8">
    <source>
        <dbReference type="SAM" id="MobiDB-lite"/>
    </source>
</evidence>
<evidence type="ECO:0000269" key="9">
    <source>
    </source>
</evidence>
<evidence type="ECO:0000269" key="10">
    <source>
    </source>
</evidence>
<evidence type="ECO:0000269" key="11">
    <source>
    </source>
</evidence>
<evidence type="ECO:0000269" key="12">
    <source>
    </source>
</evidence>
<evidence type="ECO:0000269" key="13">
    <source>
    </source>
</evidence>
<evidence type="ECO:0000269" key="14">
    <source>
    </source>
</evidence>
<evidence type="ECO:0000269" key="15">
    <source>
    </source>
</evidence>
<evidence type="ECO:0000269" key="16">
    <source>
    </source>
</evidence>
<evidence type="ECO:0000269" key="17">
    <source>
    </source>
</evidence>
<evidence type="ECO:0000269" key="18">
    <source>
    </source>
</evidence>
<evidence type="ECO:0000269" key="19">
    <source>
    </source>
</evidence>
<evidence type="ECO:0000269" key="20">
    <source>
    </source>
</evidence>
<evidence type="ECO:0000269" key="21">
    <source>
    </source>
</evidence>
<evidence type="ECO:0000269" key="22">
    <source>
    </source>
</evidence>
<evidence type="ECO:0000269" key="23">
    <source>
    </source>
</evidence>
<evidence type="ECO:0000269" key="24">
    <source>
    </source>
</evidence>
<evidence type="ECO:0000269" key="25">
    <source>
    </source>
</evidence>
<evidence type="ECO:0000269" key="26">
    <source ref="28"/>
</evidence>
<evidence type="ECO:0000303" key="27">
    <source>
    </source>
</evidence>
<evidence type="ECO:0000305" key="28"/>
<evidence type="ECO:0000305" key="29">
    <source>
    </source>
</evidence>
<evidence type="ECO:0007744" key="30">
    <source>
    </source>
</evidence>
<evidence type="ECO:0007829" key="31">
    <source>
        <dbReference type="PDB" id="2OOA"/>
    </source>
</evidence>
<evidence type="ECO:0007829" key="32">
    <source>
        <dbReference type="PDB" id="3VGO"/>
    </source>
</evidence>
<evidence type="ECO:0007829" key="33">
    <source>
        <dbReference type="PDB" id="3ZNI"/>
    </source>
</evidence>
<evidence type="ECO:0007829" key="34">
    <source>
        <dbReference type="PDB" id="8GCY"/>
    </source>
</evidence>
<evidence type="ECO:0007829" key="35">
    <source>
        <dbReference type="PDB" id="8QNH"/>
    </source>
</evidence>
<evidence type="ECO:0007829" key="36">
    <source>
        <dbReference type="PDB" id="8QNI"/>
    </source>
</evidence>
<evidence type="ECO:0007829" key="37">
    <source>
        <dbReference type="PDB" id="8QTG"/>
    </source>
</evidence>
<evidence type="ECO:0007829" key="38">
    <source>
        <dbReference type="PDB" id="8QTJ"/>
    </source>
</evidence>
<evidence type="ECO:0007829" key="39">
    <source>
        <dbReference type="PDB" id="8QTK"/>
    </source>
</evidence>
<keyword id="KW-0002">3D-structure</keyword>
<keyword id="KW-0025">Alternative splicing</keyword>
<keyword id="KW-0106">Calcium</keyword>
<keyword id="KW-0963">Cytoplasm</keyword>
<keyword id="KW-0225">Disease variant</keyword>
<keyword id="KW-0479">Metal-binding</keyword>
<keyword id="KW-0597">Phosphoprotein</keyword>
<keyword id="KW-1267">Proteomics identification</keyword>
<keyword id="KW-1185">Reference proteome</keyword>
<keyword id="KW-0677">Repeat</keyword>
<keyword id="KW-0808">Transferase</keyword>
<keyword id="KW-0832">Ubl conjugation</keyword>
<keyword id="KW-0833">Ubl conjugation pathway</keyword>
<keyword id="KW-0862">Zinc</keyword>
<keyword id="KW-0863">Zinc-finger</keyword>
<sequence length="982" mass="109450">MANSMNGRNPGGRGGNPRKGRILGIIDAIQDAVGPPKQAAADRRTVEKTWKLMDKVVRLCQNPKLQLKNSPPYILDILPDTYQHLRLILSKYDDNQKLAQLSENEYFKIYIDSLMKKSKRAIRLFKEGKERMYEEQSQDRRNLTKLSLIFSHMLAEIKAIFPNGQFQGDNFRITKADAAEFWRKFFGDKTIVPWKVFRQCLHEVHQISSGLEAMALKSTIDLTCNDYISVFEFDIFTRLFQPWGSILRNWNFLAVTHPGYMAFLTYDEVKARLQKYSTKPGSYIFRLSCTRLGQWAIGYVTGDGNILQTIPHNKPLFQALIDGSREGFYLYPDGRSYNPDLTGLCEPTPHDHIKVTQEQYELYCEMGSTFQLCKICAENDKDVKIEPCGHLMCTSCLTAWQESDGQGCPFCRCEIKGTEPIIVDPFDPRDEGSRCCSIIDPFGMPMLDLDDDDDREESLMMNRLANVRKCTDRQNSPVTSPGSSPLAQRRKPQPDPLQIPHLSLPPVPPRLDLIQKGIVRSPCGSPTGSPKSSPCMVRKQDKPLPAPPPPLRDPPPPPPERPPPIPPDNRLSRHIHHVESVPSRDPPMPLEAWCPRDVFGTNQLVGCRLLGEGSPKPGITASSNVNGRHSRVGSDPVLMRKHRRHDLPLEGAKVFSNGHLGSEEYDVPPRLSPPPPVTTLLPSIKCTGPLANSLSEKTRDPVEEDDDEYKIPSSHPVSLNSQPSHCHNVKPPVRSCDNGHCMLNGTHGPSSEKKSNIPDLSIYLKGDVFDSASDPVPLPPARPPTRDNPKHGSSLNRTPSDYDLLIPPLGEDAFDALPPSLPPPPPPARHSLIEHSKPPGSSSRPSSGQDLFLLPSDPFVDLASGQVPLPPARRLPGENVKTNRTSQDYDQLPSCSDGSQAPARPPKPRPRRTAPEIHHRKPHGPEAALENVDAKIAKLMGEGYAFEEVKRALEIAQNNVEVARSILREFAFPPPVSPRLNL</sequence>
<protein>
    <recommendedName>
        <fullName>E3 ubiquitin-protein ligase CBL-B</fullName>
        <ecNumber evidence="15 22">2.3.2.27</ecNumber>
    </recommendedName>
    <alternativeName>
        <fullName>Casitas B-lineage lymphoma proto-oncogene b</fullName>
    </alternativeName>
    <alternativeName>
        <fullName>RING finger protein 56</fullName>
    </alternativeName>
    <alternativeName>
        <fullName evidence="28">RING-type E3 ubiquitin transferase CBL-B</fullName>
    </alternativeName>
    <alternativeName>
        <fullName>SH3-binding protein CBL-B</fullName>
    </alternativeName>
    <alternativeName>
        <fullName>Signal transduction protein CBL-B</fullName>
    </alternativeName>
</protein>
<name>CBLB_HUMAN</name>